<keyword id="KW-0007">Acetylation</keyword>
<keyword id="KW-1072">Activation of host autophagy by virus</keyword>
<keyword id="KW-0053">Apoptosis</keyword>
<keyword id="KW-0067">ATP-binding</keyword>
<keyword id="KW-0167">Capsid protein</keyword>
<keyword id="KW-1165">Clathrin-mediated endocytosis of virus by host</keyword>
<keyword id="KW-1015">Disulfide bond</keyword>
<keyword id="KW-1170">Fusion of virus membrane with host endosomal membrane</keyword>
<keyword id="KW-1168">Fusion of virus membrane with host membrane</keyword>
<keyword id="KW-1078">G1/S host cell cycle checkpoint dysregulation by virus</keyword>
<keyword id="KW-0325">Glycoprotein</keyword>
<keyword id="KW-0347">Helicase</keyword>
<keyword id="KW-1032">Host cell membrane</keyword>
<keyword id="KW-1035">Host cytoplasm</keyword>
<keyword id="KW-1038">Host endoplasmic reticulum</keyword>
<keyword id="KW-1041">Host lipid droplet</keyword>
<keyword id="KW-1043">Host membrane</keyword>
<keyword id="KW-1045">Host mitochondrion</keyword>
<keyword id="KW-1048">Host nucleus</keyword>
<keyword id="KW-0945">Host-virus interaction</keyword>
<keyword id="KW-0378">Hydrolase</keyword>
<keyword id="KW-1090">Inhibition of host innate immune response by virus</keyword>
<keyword id="KW-1114">Inhibition of host interferon signaling pathway by virus</keyword>
<keyword id="KW-1097">Inhibition of host MAVS by virus</keyword>
<keyword id="KW-1113">Inhibition of host RLR pathway by virus</keyword>
<keyword id="KW-1105">Inhibition of host STAT1 by virus</keyword>
<keyword id="KW-1110">Inhibition of host TRAFs by virus</keyword>
<keyword id="KW-0922">Interferon antiviral system evasion</keyword>
<keyword id="KW-0407">Ion channel</keyword>
<keyword id="KW-0406">Ion transport</keyword>
<keyword id="KW-1017">Isopeptide bond</keyword>
<keyword id="KW-0449">Lipoprotein</keyword>
<keyword id="KW-0460">Magnesium</keyword>
<keyword id="KW-0472">Membrane</keyword>
<keyword id="KW-0479">Metal-binding</keyword>
<keyword id="KW-1121">Modulation of host cell cycle by virus</keyword>
<keyword id="KW-0511">Multifunctional enzyme</keyword>
<keyword id="KW-0547">Nucleotide-binding</keyword>
<keyword id="KW-0548">Nucleotidyltransferase</keyword>
<keyword id="KW-0553">Oncogene</keyword>
<keyword id="KW-0564">Palmitate</keyword>
<keyword id="KW-0597">Phosphoprotein</keyword>
<keyword id="KW-0645">Protease</keyword>
<keyword id="KW-0687">Ribonucleoprotein</keyword>
<keyword id="KW-0694">RNA-binding</keyword>
<keyword id="KW-0696">RNA-directed RNA polymerase</keyword>
<keyword id="KW-0720">Serine protease</keyword>
<keyword id="KW-0729">SH3-binding</keyword>
<keyword id="KW-0788">Thiol protease</keyword>
<keyword id="KW-0804">Transcription</keyword>
<keyword id="KW-0805">Transcription regulation</keyword>
<keyword id="KW-0808">Transferase</keyword>
<keyword id="KW-0812">Transmembrane</keyword>
<keyword id="KW-1133">Transmembrane helix</keyword>
<keyword id="KW-0813">Transport</keyword>
<keyword id="KW-0832">Ubl conjugation</keyword>
<keyword id="KW-1161">Viral attachment to host cell</keyword>
<keyword id="KW-0261">Viral envelope protein</keyword>
<keyword id="KW-0899">Viral immunoevasion</keyword>
<keyword id="KW-1182">Viral ion channel</keyword>
<keyword id="KW-0543">Viral nucleoprotein</keyword>
<keyword id="KW-1162">Viral penetration into host cytoplasm</keyword>
<keyword id="KW-0693">Viral RNA replication</keyword>
<keyword id="KW-0946">Virion</keyword>
<keyword id="KW-1164">Virus endocytosis by host</keyword>
<keyword id="KW-1160">Virus entry into host cell</keyword>
<keyword id="KW-0862">Zinc</keyword>
<evidence type="ECO:0000250" key="1"/>
<evidence type="ECO:0000250" key="2">
    <source>
        <dbReference type="UniProtKB" id="O92972"/>
    </source>
</evidence>
<evidence type="ECO:0000250" key="3">
    <source>
        <dbReference type="UniProtKB" id="P26662"/>
    </source>
</evidence>
<evidence type="ECO:0000250" key="4">
    <source>
        <dbReference type="UniProtKB" id="P26663"/>
    </source>
</evidence>
<evidence type="ECO:0000250" key="5">
    <source>
        <dbReference type="UniProtKB" id="P26664"/>
    </source>
</evidence>
<evidence type="ECO:0000250" key="6">
    <source>
        <dbReference type="UniProtKB" id="P27958"/>
    </source>
</evidence>
<evidence type="ECO:0000250" key="7">
    <source>
        <dbReference type="UniProtKB" id="P29846"/>
    </source>
</evidence>
<evidence type="ECO:0000250" key="8">
    <source>
        <dbReference type="UniProtKB" id="Q01403"/>
    </source>
</evidence>
<evidence type="ECO:0000250" key="9">
    <source>
        <dbReference type="UniProtKB" id="Q03463"/>
    </source>
</evidence>
<evidence type="ECO:0000250" key="10">
    <source>
        <dbReference type="UniProtKB" id="Q5EG65"/>
    </source>
</evidence>
<evidence type="ECO:0000250" key="11">
    <source>
        <dbReference type="UniProtKB" id="Q913V3"/>
    </source>
</evidence>
<evidence type="ECO:0000250" key="12">
    <source>
        <dbReference type="UniProtKB" id="Q99IB8"/>
    </source>
</evidence>
<evidence type="ECO:0000250" key="13">
    <source>
        <dbReference type="UniProtKB" id="Q9WMX2"/>
    </source>
</evidence>
<evidence type="ECO:0000255" key="14"/>
<evidence type="ECO:0000255" key="15">
    <source>
        <dbReference type="PROSITE-ProRule" id="PRU00539"/>
    </source>
</evidence>
<evidence type="ECO:0000255" key="16">
    <source>
        <dbReference type="PROSITE-ProRule" id="PRU00541"/>
    </source>
</evidence>
<evidence type="ECO:0000255" key="17">
    <source>
        <dbReference type="PROSITE-ProRule" id="PRU01030"/>
    </source>
</evidence>
<evidence type="ECO:0000255" key="18">
    <source>
        <dbReference type="PROSITE-ProRule" id="PRU01166"/>
    </source>
</evidence>
<evidence type="ECO:0000256" key="19">
    <source>
        <dbReference type="SAM" id="MobiDB-lite"/>
    </source>
</evidence>
<evidence type="ECO:0000305" key="20"/>
<organismHost>
    <name type="scientific">Homo sapiens</name>
    <name type="common">Human</name>
    <dbReference type="NCBI Taxonomy" id="9606"/>
</organismHost>
<sequence length="3010" mass="326578">MSTNPKPQRKTKRNTYRRPQDVKFPGGGQIVGGVYVLPRRGPTLGVRATRKTSERSQPRGRRQPIPKARRPEGRAWAQPGYPWPLYGNEGLGWAGWLLSPRGSRPSWGPTDPRRRSRNLGKVIDTLTCGFADLMGYIPLVGAPLGGAARALAHGVRVLEDGVNYATGNLPGCSFSIFLLALLSCLTIPASAYQVRNASGLYHVTNDCSNSSIVYEAAGMIMHTPGCVPCVRENNASRCWVALTPTLAARNTSIPTTTIRRHVDLLVGAAAFCSAMYVGDLCGSVFLVSQLFTFSPRRYETVQDCNCSIYPGHVSGHRMAWDMMMNWSPTTALVVSQLLRIPQAVVDMVAGAHWGVLAGLAYYSMVGNWAKVLIVMLLFAGVDGVTYTTGGSQARHTQSVTSFFTQGPAQRIQLINTNGSWHINRTALNCNESLNTGFFAALFYAHKFNSSGCPERMASCSSIDKFAQGWGPITYTEPRDLDQRPYCWHYAPRQCGIVPASQVCGPVYCFTPSPVVVGTTDRSGAPTYNWGANETDVLLLNNTRPPQGNWFGCTWMNSTGFTKTCGGPPCNIGGVGNLTLTCPTDCFRKHPEATYTKCGSGPWLTPRCIVDYPYRLWHYPCTVNFTIFKVRMYVGGVEHRLSAACNWTRGERCDLEDRDRSELSPLLLSTTEWQTLPCSFTTLPALSTGLIHLHQNIVDVQYLYGIGSAVVSFVIKWEYIVLLFLLLADARVCACLWMMLLIAQAEAALENLVVLNAASLAGADGILSFLVFFCAAWYIKGRLVPGAAYALYGVWPLLLLLLALPPRAYAMDREMAASCGGVVFVGLILLTLSPHYKVFLARLIWWLQYFITRAEAHLCVWVPPLNVRGGRDAIILLTCAAHPELIFDITKLLLAILGPLMVLQAAITAMPYFVRAQGLIRACMLVRKVAGGHYVQMAFMKLAALTGTYVYDHLTPLQDWAHAGLRDLAVAVEPVVFSDMETKIITWGADTAACGDIILGLPVSARRGREILLGPADSIEGQGWRLLAPITAYAQQTRGLLGCIVTSLTGRDKNQVEGEVQVVSTATQSFLATCVNGVCWTVFHGAGSKTLAGPKGPITQMYTNVDQDLVGWHAPPGARSLTPCTCGSSDLYLVTRHADVIPVRRRGDGRGSLLSPRPVSYLKGSSGGPLLCPSGHAVGIFRAAVCTRGVAKAVDFIPVESMETTMRSPVFTDNSSPPAVPQTFQVAHLHAPTGSGKSTKVPAAYAAQGYKVLVLNPSVAATLGFGAYMSKAHGTDPNIRTGVRTITTGAPITYSTYGKFLADGGCSGGAYDIIICDECHSTDSTTILGIGTVLDQAETAGARLVVLATATPPGSVTVPHPNIEEVALSNTGEIPFYGKAIPLEAIKGGRHLIFCHSKKKCDELAAKLSGLGINAVAYYRGLDVSVIPTSGDVVIVATDALMTGYTGDFDSVIDCNTCVTQTVDFSLDPTFTIETTTVPQDAVSRSQRRGRTGRGRGGIYRFVTPGERPSGMFDSSVLCECYDAGCAWYELTPAETTVRLRAYLNTPGLPVCQDHLEFWESVFTGLTHIDAHFLSQTKQAGDNFPYLVAYQATVCARAQAPPPSWDQMWKCLIRLKPTLHGPTPLLYRLGAVQNEITLTHPITKFIMACMSADLEVVTSTWVLVGGVLAALAAYCLTTGSVVIVGRIILSGRPAVVPDREVLYREFDEMEECASHLPYIEQGMQLAEQFKQKALGLLQTATKQAEAAAPVVESRWRALEAFWAKHMWNFISGIQYLAGLSTLPGNPAIASLMAFTASITSPLTTQNTLLFNILGGWVAAQLAPPSAASAFVGAGIAGAAIGSIGLGKVLVDILAGYGAGVAGALVAFKVMSGEAPSAEDLVNLLPAILSPGALVVGVVCAAILRRHVGPGEGAVQWMNRLIAFASRGNHVSPTHYVPESDAAARVTQILSSLTITQLLKRLHQWINEDCSTPCSGSWLKDVWDWICTVLTDFKTWLQSKLLPKLPGVPFFSCQRGYKGVWRGDGIMQTTCPCGAQITGHVKNGSMRIVGPKTCSNTWHGTFPINAYTTGPCTPSPAPNYSRALWRVAAEEYVEITRVGDFHYVTGMTTDNVKCPCQVPAPEFFTELDGVRLHRYAPACRPLLREDVTFQVGLNQYLVGSQLPCEPEPDVAVLTSMLTDPSHITAETAKRRLARGSPPSLASSSASQLSAPSLKATCTTHHDSPDADLIEANLLWRQEMGGNITRVESENKVVILDSFDPLRAEEDEREVSVAAEILRKSKKFPPALPIWARPDYNPPLLESWKSPDYVPPAVHGCPLPPTTGPPIPPPRKKRTVVLTESTVSSALAELATKTFGSSGSSAVDSGTATAPPDQTSDDGDKESDVESYSSMPPLEGEPGDPDLSDGSWSTVSGEASDDIVCCSMSYTWTGALITPCAAEESKLPINALSNSLLRHHNMVYATTSRSASLRQKKVTFDRLQVLDDHYRDVLKEMKAKASTVKAKLLSVEEACKLTPPHSAKSKFGYGAKDVRNLSSKAINHIRSVWKDLLEDTETPIDTTIMAKSEVFCVQPEKGGRKPARLIVFPDLGVRVCEKMALYDVVSTLPQAVMGSSYGFQYSPGQRVEFLVNAWKSKKSPMGFSYDTRCFDSTVTESDIRVEESIYQCCDLAPEARQAIKSLTERLYIGGPLTNSKGQNCGYRRCRASGVLTTSCGNTLTCYLKATAACRAAKLQDCTMLVNGDDLVVICESAGTQEDAASLRVFTEAMTRYSAPPGDPPQPEYDLELITSCSSNVSVAHDASGKRVYYLTRDPTTPLARAAWETARHTPVNSWLGNIIMYAPTLWARMILMTHFFSILLAQEQLEKALDCQIYGACYSIEPLDLPQIIQRLHGLSAFSLHSYSPGEINRVASCLRKLGVPPLRVWRHRARSVRARLLSQGGRAATCGKYLFNWAVRTKLKLTPIPAASQLDLSSWFVAGYSGGDIYHSLSRARPRWFMWCLLLLSVGVGIYLLPNR</sequence>
<protein>
    <recommendedName>
        <fullName>Genome polyprotein</fullName>
    </recommendedName>
    <component>
        <recommendedName>
            <fullName>Core protein precursor</fullName>
        </recommendedName>
        <alternativeName>
            <fullName>Capsid protein C</fullName>
        </alternativeName>
        <alternativeName>
            <fullName>p23</fullName>
        </alternativeName>
    </component>
    <component>
        <recommendedName>
            <fullName>Mature core protein</fullName>
        </recommendedName>
        <alternativeName>
            <fullName>p21</fullName>
        </alternativeName>
    </component>
    <component>
        <recommendedName>
            <fullName>Envelope glycoprotein E1</fullName>
        </recommendedName>
        <alternativeName>
            <fullName>gp32</fullName>
        </alternativeName>
        <alternativeName>
            <fullName>gp35</fullName>
        </alternativeName>
    </component>
    <component>
        <recommendedName>
            <fullName>Envelope glycoprotein E2</fullName>
        </recommendedName>
        <alternativeName>
            <fullName>NS1</fullName>
        </alternativeName>
        <alternativeName>
            <fullName>gp68</fullName>
        </alternativeName>
        <alternativeName>
            <fullName>gp70</fullName>
        </alternativeName>
    </component>
    <component>
        <recommendedName>
            <fullName>Viroporin p7</fullName>
        </recommendedName>
    </component>
    <component>
        <recommendedName>
            <fullName>Protease NS2</fullName>
            <shortName>p23</shortName>
            <ecNumber evidence="4">3.4.22.-</ecNumber>
        </recommendedName>
        <alternativeName>
            <fullName>Non-structural protein 2</fullName>
            <shortName>NS2</shortName>
        </alternativeName>
    </component>
    <component>
        <recommendedName>
            <fullName>Serine protease/helicase NS3</fullName>
            <ecNumber evidence="6">3.4.21.98</ecNumber>
            <ecNumber evidence="6">3.6.1.15</ecNumber>
            <ecNumber evidence="6">3.6.4.13</ecNumber>
        </recommendedName>
        <alternativeName>
            <fullName>Hepacivirin</fullName>
        </alternativeName>
        <alternativeName>
            <fullName evidence="6">NS3 helicase</fullName>
        </alternativeName>
        <alternativeName>
            <fullName evidence="6">NS3 protease</fullName>
        </alternativeName>
        <alternativeName>
            <fullName>NS3P</fullName>
        </alternativeName>
        <alternativeName>
            <fullName>Viroporin p70</fullName>
        </alternativeName>
    </component>
    <component>
        <recommendedName>
            <fullName>Non-structural protein 4A</fullName>
            <shortName>NS4A</shortName>
        </recommendedName>
        <alternativeName>
            <fullName>p8</fullName>
        </alternativeName>
    </component>
    <component>
        <recommendedName>
            <fullName>Non-structural protein 4B</fullName>
            <shortName>NS4B</shortName>
        </recommendedName>
        <alternativeName>
            <fullName>p27</fullName>
        </alternativeName>
    </component>
    <component>
        <recommendedName>
            <fullName>Non-structural protein 5A</fullName>
            <shortName>NS5A</shortName>
        </recommendedName>
        <alternativeName>
            <fullName>p56/58</fullName>
        </alternativeName>
    </component>
    <component>
        <recommendedName>
            <fullName>RNA-directed RNA polymerase</fullName>
            <ecNumber evidence="6">2.7.7.48</ecNumber>
        </recommendedName>
        <alternativeName>
            <fullName>NS5B</fullName>
        </alternativeName>
        <alternativeName>
            <fullName>p68</fullName>
        </alternativeName>
    </component>
</protein>
<dbReference type="EC" id="3.4.22.-" evidence="4"/>
<dbReference type="EC" id="3.4.21.98" evidence="6"/>
<dbReference type="EC" id="3.6.1.15" evidence="6"/>
<dbReference type="EC" id="3.6.4.13" evidence="6"/>
<dbReference type="EC" id="2.7.7.48" evidence="6"/>
<dbReference type="EMBL" id="D11168">
    <property type="protein sequence ID" value="BAA01943.1"/>
    <property type="molecule type" value="Genomic_RNA"/>
</dbReference>
<dbReference type="PIR" id="A45573">
    <property type="entry name" value="A45573"/>
</dbReference>
<dbReference type="BMRB" id="Q00269"/>
<dbReference type="SMR" id="Q00269"/>
<dbReference type="MEROPS" id="S29.001"/>
<dbReference type="euHCVdb" id="D11168"/>
<dbReference type="Proteomes" id="UP000002683">
    <property type="component" value="Genome"/>
</dbReference>
<dbReference type="GO" id="GO:0044167">
    <property type="term" value="C:host cell endoplasmic reticulum membrane"/>
    <property type="evidence" value="ECO:0007669"/>
    <property type="project" value="UniProtKB-SubCell"/>
</dbReference>
<dbReference type="GO" id="GO:0044186">
    <property type="term" value="C:host cell lipid droplet"/>
    <property type="evidence" value="ECO:0007669"/>
    <property type="project" value="UniProtKB-SubCell"/>
</dbReference>
<dbReference type="GO" id="GO:0044191">
    <property type="term" value="C:host cell mitochondrial membrane"/>
    <property type="evidence" value="ECO:0007669"/>
    <property type="project" value="UniProtKB-SubCell"/>
</dbReference>
<dbReference type="GO" id="GO:0042025">
    <property type="term" value="C:host cell nucleus"/>
    <property type="evidence" value="ECO:0007669"/>
    <property type="project" value="UniProtKB-SubCell"/>
</dbReference>
<dbReference type="GO" id="GO:0044220">
    <property type="term" value="C:host cell perinuclear region of cytoplasm"/>
    <property type="evidence" value="ECO:0007669"/>
    <property type="project" value="UniProtKB-SubCell"/>
</dbReference>
<dbReference type="GO" id="GO:0020002">
    <property type="term" value="C:host cell plasma membrane"/>
    <property type="evidence" value="ECO:0007669"/>
    <property type="project" value="UniProtKB-SubCell"/>
</dbReference>
<dbReference type="GO" id="GO:0016020">
    <property type="term" value="C:membrane"/>
    <property type="evidence" value="ECO:0007669"/>
    <property type="project" value="UniProtKB-KW"/>
</dbReference>
<dbReference type="GO" id="GO:1990904">
    <property type="term" value="C:ribonucleoprotein complex"/>
    <property type="evidence" value="ECO:0007669"/>
    <property type="project" value="UniProtKB-KW"/>
</dbReference>
<dbReference type="GO" id="GO:0019031">
    <property type="term" value="C:viral envelope"/>
    <property type="evidence" value="ECO:0007669"/>
    <property type="project" value="UniProtKB-KW"/>
</dbReference>
<dbReference type="GO" id="GO:0019013">
    <property type="term" value="C:viral nucleocapsid"/>
    <property type="evidence" value="ECO:0007669"/>
    <property type="project" value="UniProtKB-KW"/>
</dbReference>
<dbReference type="GO" id="GO:0055036">
    <property type="term" value="C:virion membrane"/>
    <property type="evidence" value="ECO:0007669"/>
    <property type="project" value="UniProtKB-SubCell"/>
</dbReference>
<dbReference type="GO" id="GO:0005524">
    <property type="term" value="F:ATP binding"/>
    <property type="evidence" value="ECO:0007669"/>
    <property type="project" value="UniProtKB-KW"/>
</dbReference>
<dbReference type="GO" id="GO:0016887">
    <property type="term" value="F:ATP hydrolysis activity"/>
    <property type="evidence" value="ECO:0007669"/>
    <property type="project" value="RHEA"/>
</dbReference>
<dbReference type="GO" id="GO:0015267">
    <property type="term" value="F:channel activity"/>
    <property type="evidence" value="ECO:0007669"/>
    <property type="project" value="UniProtKB-KW"/>
</dbReference>
<dbReference type="GO" id="GO:0004197">
    <property type="term" value="F:cysteine-type endopeptidase activity"/>
    <property type="evidence" value="ECO:0007669"/>
    <property type="project" value="InterPro"/>
</dbReference>
<dbReference type="GO" id="GO:0003723">
    <property type="term" value="F:RNA binding"/>
    <property type="evidence" value="ECO:0007669"/>
    <property type="project" value="UniProtKB-KW"/>
</dbReference>
<dbReference type="GO" id="GO:0003724">
    <property type="term" value="F:RNA helicase activity"/>
    <property type="evidence" value="ECO:0007669"/>
    <property type="project" value="UniProtKB-EC"/>
</dbReference>
<dbReference type="GO" id="GO:0003968">
    <property type="term" value="F:RNA-directed RNA polymerase activity"/>
    <property type="evidence" value="ECO:0007669"/>
    <property type="project" value="UniProtKB-KW"/>
</dbReference>
<dbReference type="GO" id="GO:0004252">
    <property type="term" value="F:serine-type endopeptidase activity"/>
    <property type="evidence" value="ECO:0007669"/>
    <property type="project" value="InterPro"/>
</dbReference>
<dbReference type="GO" id="GO:0017124">
    <property type="term" value="F:SH3 domain binding"/>
    <property type="evidence" value="ECO:0007669"/>
    <property type="project" value="UniProtKB-KW"/>
</dbReference>
<dbReference type="GO" id="GO:0005198">
    <property type="term" value="F:structural molecule activity"/>
    <property type="evidence" value="ECO:0007669"/>
    <property type="project" value="InterPro"/>
</dbReference>
<dbReference type="GO" id="GO:0008270">
    <property type="term" value="F:zinc ion binding"/>
    <property type="evidence" value="ECO:0007669"/>
    <property type="project" value="InterPro"/>
</dbReference>
<dbReference type="GO" id="GO:0075512">
    <property type="term" value="P:clathrin-dependent endocytosis of virus by host cell"/>
    <property type="evidence" value="ECO:0007669"/>
    <property type="project" value="UniProtKB-KW"/>
</dbReference>
<dbReference type="GO" id="GO:0039654">
    <property type="term" value="P:fusion of virus membrane with host endosome membrane"/>
    <property type="evidence" value="ECO:0007669"/>
    <property type="project" value="UniProtKB-KW"/>
</dbReference>
<dbReference type="GO" id="GO:0034220">
    <property type="term" value="P:monoatomic ion transmembrane transport"/>
    <property type="evidence" value="ECO:0007669"/>
    <property type="project" value="UniProtKB-KW"/>
</dbReference>
<dbReference type="GO" id="GO:0006508">
    <property type="term" value="P:proteolysis"/>
    <property type="evidence" value="ECO:0007669"/>
    <property type="project" value="UniProtKB-KW"/>
</dbReference>
<dbReference type="GO" id="GO:0039520">
    <property type="term" value="P:symbiont-mediated activation of host autophagy"/>
    <property type="evidence" value="ECO:0007669"/>
    <property type="project" value="UniProtKB-KW"/>
</dbReference>
<dbReference type="GO" id="GO:0039645">
    <property type="term" value="P:symbiont-mediated perturbation of host cell cycle G1/S transition checkpoint"/>
    <property type="evidence" value="ECO:0007669"/>
    <property type="project" value="UniProtKB-KW"/>
</dbReference>
<dbReference type="GO" id="GO:0039545">
    <property type="term" value="P:symbiont-mediated suppression of host cytoplasmic pattern recognition receptor signaling pathway via inhibition of MAVS activity"/>
    <property type="evidence" value="ECO:0007669"/>
    <property type="project" value="UniProtKB-KW"/>
</dbReference>
<dbReference type="GO" id="GO:0039563">
    <property type="term" value="P:symbiont-mediated suppression of host JAK-STAT cascade via inhibition of STAT1 activity"/>
    <property type="evidence" value="ECO:0007669"/>
    <property type="project" value="UniProtKB-KW"/>
</dbReference>
<dbReference type="GO" id="GO:0039527">
    <property type="term" value="P:symbiont-mediated suppression of host TRAF-mediated signal transduction"/>
    <property type="evidence" value="ECO:0007669"/>
    <property type="project" value="UniProtKB-KW"/>
</dbReference>
<dbReference type="GO" id="GO:0039502">
    <property type="term" value="P:symbiont-mediated suppression of host type I interferon-mediated signaling pathway"/>
    <property type="evidence" value="ECO:0007669"/>
    <property type="project" value="UniProtKB-KW"/>
</dbReference>
<dbReference type="GO" id="GO:0019087">
    <property type="term" value="P:symbiont-mediated transformation of host cell"/>
    <property type="evidence" value="ECO:0007669"/>
    <property type="project" value="InterPro"/>
</dbReference>
<dbReference type="GO" id="GO:0039694">
    <property type="term" value="P:viral RNA genome replication"/>
    <property type="evidence" value="ECO:0007669"/>
    <property type="project" value="InterPro"/>
</dbReference>
<dbReference type="GO" id="GO:0019062">
    <property type="term" value="P:virion attachment to host cell"/>
    <property type="evidence" value="ECO:0007669"/>
    <property type="project" value="UniProtKB-KW"/>
</dbReference>
<dbReference type="CDD" id="cd17931">
    <property type="entry name" value="DEXHc_viral_Ns3"/>
    <property type="match status" value="1"/>
</dbReference>
<dbReference type="CDD" id="cd20903">
    <property type="entry name" value="HCV_p7"/>
    <property type="match status" value="1"/>
</dbReference>
<dbReference type="CDD" id="cd23202">
    <property type="entry name" value="Hepacivirus_RdRp"/>
    <property type="match status" value="1"/>
</dbReference>
<dbReference type="FunFam" id="1.10.820.10:FF:000001">
    <property type="entry name" value="Genome polyprotein"/>
    <property type="match status" value="1"/>
</dbReference>
<dbReference type="FunFam" id="1.20.1280.150:FF:000001">
    <property type="entry name" value="Genome polyprotein"/>
    <property type="match status" value="1"/>
</dbReference>
<dbReference type="FunFam" id="2.20.25.210:FF:000001">
    <property type="entry name" value="Genome polyprotein"/>
    <property type="match status" value="1"/>
</dbReference>
<dbReference type="FunFam" id="2.20.25.220:FF:000001">
    <property type="entry name" value="Genome polyprotein"/>
    <property type="match status" value="1"/>
</dbReference>
<dbReference type="FunFam" id="2.40.10.10:FF:000029">
    <property type="entry name" value="Genome polyprotein"/>
    <property type="match status" value="1"/>
</dbReference>
<dbReference type="FunFam" id="2.40.10.120:FF:000003">
    <property type="entry name" value="Genome polyprotein"/>
    <property type="match status" value="1"/>
</dbReference>
<dbReference type="FunFam" id="3.30.160.890:FF:000001">
    <property type="entry name" value="Genome polyprotein"/>
    <property type="match status" value="1"/>
</dbReference>
<dbReference type="FunFam" id="3.30.70.270:FF:000015">
    <property type="entry name" value="Genome polyprotein"/>
    <property type="match status" value="1"/>
</dbReference>
<dbReference type="FunFam" id="3.40.50.300:FF:000557">
    <property type="entry name" value="Genome polyprotein"/>
    <property type="match status" value="1"/>
</dbReference>
<dbReference type="FunFam" id="3.40.50.300:FF:000717">
    <property type="entry name" value="Genome polyprotein"/>
    <property type="match status" value="1"/>
</dbReference>
<dbReference type="Gene3D" id="2.40.10.120">
    <property type="match status" value="1"/>
</dbReference>
<dbReference type="Gene3D" id="3.30.70.270">
    <property type="match status" value="2"/>
</dbReference>
<dbReference type="Gene3D" id="6.10.250.1610">
    <property type="match status" value="1"/>
</dbReference>
<dbReference type="Gene3D" id="6.10.250.1750">
    <property type="match status" value="1"/>
</dbReference>
<dbReference type="Gene3D" id="6.10.250.2920">
    <property type="match status" value="1"/>
</dbReference>
<dbReference type="Gene3D" id="2.20.25.210">
    <property type="entry name" value="Hepatitis C NS5A, domain 1B"/>
    <property type="match status" value="1"/>
</dbReference>
<dbReference type="Gene3D" id="4.10.710.10">
    <property type="entry name" value="Hepatitis C Virus Capsid Protein, Chain A"/>
    <property type="match status" value="1"/>
</dbReference>
<dbReference type="Gene3D" id="3.30.160.890">
    <property type="entry name" value="Hepatitis C virus envelope glycoprotein E1, chain C"/>
    <property type="match status" value="1"/>
</dbReference>
<dbReference type="Gene3D" id="2.30.30.710">
    <property type="entry name" value="Hepatitis C virus non-structural protein NS2, C-terminal domain"/>
    <property type="match status" value="1"/>
</dbReference>
<dbReference type="Gene3D" id="1.20.1280.150">
    <property type="entry name" value="Hepatitis C virus non-structural protein NS2, N-terminal domain"/>
    <property type="match status" value="1"/>
</dbReference>
<dbReference type="Gene3D" id="2.20.25.220">
    <property type="entry name" value="Hepatitis C virus NS5A, 1B domain"/>
    <property type="match status" value="1"/>
</dbReference>
<dbReference type="Gene3D" id="3.40.50.300">
    <property type="entry name" value="P-loop containing nucleotide triphosphate hydrolases"/>
    <property type="match status" value="2"/>
</dbReference>
<dbReference type="Gene3D" id="1.10.820.10">
    <property type="entry name" value="RNA Helicase Chain A , domain 3"/>
    <property type="match status" value="1"/>
</dbReference>
<dbReference type="Gene3D" id="2.40.10.10">
    <property type="entry name" value="Trypsin-like serine proteases"/>
    <property type="match status" value="1"/>
</dbReference>
<dbReference type="InterPro" id="IPR043502">
    <property type="entry name" value="DNA/RNA_pol_sf"/>
</dbReference>
<dbReference type="InterPro" id="IPR011492">
    <property type="entry name" value="Flavi_DEAD"/>
</dbReference>
<dbReference type="InterPro" id="IPR002521">
    <property type="entry name" value="HCV_Core_C"/>
</dbReference>
<dbReference type="InterPro" id="IPR044896">
    <property type="entry name" value="HCV_core_chain_A"/>
</dbReference>
<dbReference type="InterPro" id="IPR002522">
    <property type="entry name" value="HCV_core_N"/>
</dbReference>
<dbReference type="InterPro" id="IPR002519">
    <property type="entry name" value="HCV_Env"/>
</dbReference>
<dbReference type="InterPro" id="IPR002531">
    <property type="entry name" value="HCV_NS1"/>
</dbReference>
<dbReference type="InterPro" id="IPR002518">
    <property type="entry name" value="HCV_NS2"/>
</dbReference>
<dbReference type="InterPro" id="IPR042205">
    <property type="entry name" value="HCV_NS2_C"/>
</dbReference>
<dbReference type="InterPro" id="IPR042209">
    <property type="entry name" value="HCV_NS2_N"/>
</dbReference>
<dbReference type="InterPro" id="IPR000745">
    <property type="entry name" value="HCV_NS4a"/>
</dbReference>
<dbReference type="InterPro" id="IPR001490">
    <property type="entry name" value="HCV_NS4b"/>
</dbReference>
<dbReference type="InterPro" id="IPR002868">
    <property type="entry name" value="HCV_NS5a"/>
</dbReference>
<dbReference type="InterPro" id="IPR013192">
    <property type="entry name" value="HCV_NS5A_1a"/>
</dbReference>
<dbReference type="InterPro" id="IPR013193">
    <property type="entry name" value="HCV_NS5a_1B_dom"/>
</dbReference>
<dbReference type="InterPro" id="IPR038568">
    <property type="entry name" value="HCV_NS5A_1B_sf"/>
</dbReference>
<dbReference type="InterPro" id="IPR024350">
    <property type="entry name" value="HCV_NS5a_C"/>
</dbReference>
<dbReference type="InterPro" id="IPR049913">
    <property type="entry name" value="HCV_p7"/>
</dbReference>
<dbReference type="InterPro" id="IPR014001">
    <property type="entry name" value="Helicase_ATP-bd"/>
</dbReference>
<dbReference type="InterPro" id="IPR001650">
    <property type="entry name" value="Helicase_C-like"/>
</dbReference>
<dbReference type="InterPro" id="IPR004109">
    <property type="entry name" value="HepC_NS3_protease"/>
</dbReference>
<dbReference type="InterPro" id="IPR054175">
    <property type="entry name" value="NS3_helicase_C"/>
</dbReference>
<dbReference type="InterPro" id="IPR038170">
    <property type="entry name" value="NS5A_1a_sf"/>
</dbReference>
<dbReference type="InterPro" id="IPR027417">
    <property type="entry name" value="P-loop_NTPase"/>
</dbReference>
<dbReference type="InterPro" id="IPR009003">
    <property type="entry name" value="Peptidase_S1_PA"/>
</dbReference>
<dbReference type="InterPro" id="IPR043504">
    <property type="entry name" value="Peptidase_S1_PA_chymotrypsin"/>
</dbReference>
<dbReference type="InterPro" id="IPR043128">
    <property type="entry name" value="Rev_trsase/Diguanyl_cyclase"/>
</dbReference>
<dbReference type="InterPro" id="IPR007094">
    <property type="entry name" value="RNA-dir_pol_PSvirus"/>
</dbReference>
<dbReference type="InterPro" id="IPR002166">
    <property type="entry name" value="RNA_pol_HCV"/>
</dbReference>
<dbReference type="Pfam" id="PF07652">
    <property type="entry name" value="Flavi_DEAD"/>
    <property type="match status" value="1"/>
</dbReference>
<dbReference type="Pfam" id="PF01543">
    <property type="entry name" value="HCV_capsid"/>
    <property type="match status" value="1"/>
</dbReference>
<dbReference type="Pfam" id="PF01542">
    <property type="entry name" value="HCV_core"/>
    <property type="match status" value="1"/>
</dbReference>
<dbReference type="Pfam" id="PF01539">
    <property type="entry name" value="HCV_env"/>
    <property type="match status" value="1"/>
</dbReference>
<dbReference type="Pfam" id="PF01560">
    <property type="entry name" value="HCV_NS1"/>
    <property type="match status" value="1"/>
</dbReference>
<dbReference type="Pfam" id="PF01538">
    <property type="entry name" value="HCV_NS2"/>
    <property type="match status" value="1"/>
</dbReference>
<dbReference type="Pfam" id="PF01006">
    <property type="entry name" value="HCV_NS4a"/>
    <property type="match status" value="1"/>
</dbReference>
<dbReference type="Pfam" id="PF01001">
    <property type="entry name" value="HCV_NS4b"/>
    <property type="match status" value="1"/>
</dbReference>
<dbReference type="Pfam" id="PF01506">
    <property type="entry name" value="HCV_NS5a"/>
    <property type="match status" value="1"/>
</dbReference>
<dbReference type="Pfam" id="PF08300">
    <property type="entry name" value="HCV_NS5a_1a"/>
    <property type="match status" value="1"/>
</dbReference>
<dbReference type="Pfam" id="PF08301">
    <property type="entry name" value="HCV_NS5a_1b"/>
    <property type="match status" value="1"/>
</dbReference>
<dbReference type="Pfam" id="PF12941">
    <property type="entry name" value="HCV_NS5a_C"/>
    <property type="match status" value="1"/>
</dbReference>
<dbReference type="Pfam" id="PF22027">
    <property type="entry name" value="NS3_helicase_C"/>
    <property type="match status" value="1"/>
</dbReference>
<dbReference type="Pfam" id="PF02907">
    <property type="entry name" value="Peptidase_S29"/>
    <property type="match status" value="1"/>
</dbReference>
<dbReference type="Pfam" id="PF00998">
    <property type="entry name" value="RdRP_3"/>
    <property type="match status" value="1"/>
</dbReference>
<dbReference type="SMART" id="SM00487">
    <property type="entry name" value="DEXDc"/>
    <property type="match status" value="1"/>
</dbReference>
<dbReference type="SMART" id="SM00490">
    <property type="entry name" value="HELICc"/>
    <property type="match status" value="1"/>
</dbReference>
<dbReference type="SUPFAM" id="SSF56672">
    <property type="entry name" value="DNA/RNA polymerases"/>
    <property type="match status" value="1"/>
</dbReference>
<dbReference type="SUPFAM" id="SSF52540">
    <property type="entry name" value="P-loop containing nucleoside triphosphate hydrolases"/>
    <property type="match status" value="2"/>
</dbReference>
<dbReference type="SUPFAM" id="SSF50494">
    <property type="entry name" value="Trypsin-like serine proteases"/>
    <property type="match status" value="1"/>
</dbReference>
<dbReference type="PROSITE" id="PS51693">
    <property type="entry name" value="HCV_NS2_PRO"/>
    <property type="match status" value="1"/>
</dbReference>
<dbReference type="PROSITE" id="PS51192">
    <property type="entry name" value="HELICASE_ATP_BIND_1"/>
    <property type="match status" value="1"/>
</dbReference>
<dbReference type="PROSITE" id="PS51194">
    <property type="entry name" value="HELICASE_CTER"/>
    <property type="match status" value="1"/>
</dbReference>
<dbReference type="PROSITE" id="PS51822">
    <property type="entry name" value="HV_PV_NS3_PRO"/>
    <property type="match status" value="1"/>
</dbReference>
<dbReference type="PROSITE" id="PS50507">
    <property type="entry name" value="RDRP_SSRNA_POS"/>
    <property type="match status" value="1"/>
</dbReference>
<comment type="function">
    <molecule>Mature core protein</molecule>
    <text evidence="3 5 6 7 12 20">Packages viral RNA to form a viral nucleocapsid, and promotes virion budding (Probable). Participates in the viral particle production as a result of its interaction with the non-structural protein 5A (By similarity). Binds RNA and may function as a RNA chaperone to induce the RNA structural rearrangements taking place during virus replication (By similarity). Modulates viral translation initiation by interacting with viral IRES and 40S ribosomal subunit (By similarity). Affects various cell signaling pathways, host immunity and lipid metabolism (Probable). Prevents the establishment of cellular antiviral state by blocking the interferon-alpha/beta (IFN-alpha/beta) and IFN-gamma signaling pathways and by blocking the formation of phosphorylated STAT1 and promoting ubiquitin-mediated proteasome-dependent degradation of STAT1 (By similarity). Activates STAT3 leading to cellular transformation (By similarity). Regulates the activity of cellular genes, including c-myc and c-fos (By similarity). May repress the promoter of p53, and sequester CREB3 and SP110 isoform 3/Sp110b in the cytoplasm (By similarity). Represses cell cycle negative regulating factor CDKN1A, thereby interrupting an important check point of normal cell cycle regulation (By similarity). Targets transcription factors involved in the regulation of inflammatory responses and in the immune response: suppresses TNF-induced NF-kappa-B activation, and activates AP-1 (By similarity). Binds to dendritic cells (DCs) via C1QR1, resulting in down-regulation of T-lymphocytes proliferation (By similarity). Alters lipid metabolism by interacting with hepatocellular proteins involved in lipid accumulation and storage (By similarity). Induces up-regulation of FAS promoter activity, and thereby contributes to the increased triglyceride accumulation in hepatocytes (steatosis) (By similarity).</text>
</comment>
<comment type="function">
    <molecule>Envelope glycoprotein E1</molecule>
    <text evidence="6">Forms a heterodimer with envelope glycoprotein E2, which mediates virus attachment to the host cell, virion internalization through clathrin-dependent endocytosis and fusion with host membrane (By similarity). Fusion with the host cell is most likely mediated by both E1 and E2, through conformational rearrangements of the heterodimer required for fusion rather than a classical class II fusion mechanism (By similarity). E1/E2 heterodimer binds host apolipoproteins such as APOB and ApoE thereby forming a lipo-viro-particle (LVP) (By similarity). APOE associated to the LVP allows the initial virus attachment to cell surface receptors such as the heparan sulfate proteoglycans (HSPGs), syndecan-1 (SDC1), syndecan-1 (SDC2), the low-density lipoprotein receptor (LDLR) and scavenger receptor class B type I (SCARB1) (By similarity). The cholesterol transfer activity of SCARB1 allows E2 exposure and binding of E2 to SCARB1 and the tetraspanin CD81 (By similarity). E1/E2 heterodimer binding on CD81 activates the epithelial growth factor receptor (EGFR) signaling pathway (By similarity). Diffusion of the complex E1-E2-EGFR-SCARB1-CD81 to the cell lateral membrane allows further interaction with Claudin 1 (CLDN1) and occludin (OCLN) to finally trigger HCV entry (By similarity).</text>
</comment>
<comment type="function">
    <molecule>Envelope glycoprotein E2</molecule>
    <text evidence="5 6">Forms a heterodimer with envelope glycoprotein E1, which mediates virus attachment to the host cell, virion internalization through clathrin-dependent endocytosis and fusion with host membrane (By similarity). Fusion with the host cell is most likely mediated by both E1 and E2, through conformational rearrangements of the heterodimer required for fusion rather than a classical class II fusion mechanism (By similarity). The interaction between envelope glycoprotein E2 and host apolipoprotein E/APOE allows the proper assembly, maturation and infectivity of the viral particles (By similarity). This interaction is probably promoted via the up-regulation of cellular autophagy by the virus (By similarity). E1/E2 heterodimer binds host apolipoproteins such as APOB and APOE thereby forming a lipo-viro-particle (LVP) (By similarity). APOE associated to the LVP allows the initial virus attachment to cell surface receptors such as the heparan sulfate proteoglycans (HSPGs), syndecan-1 (SDC1), syndecan-1 (SDC2), the low-density lipoprotein receptor (LDLR) and scavenger receptor class B type I (SCARB1) (By similarity). The cholesterol transfer activity of SCARB1 allows E2 exposure and binding of E2 to SCARB1 and the tetraspanin CD81 (By similarity). E1/E2 heterodimer binding on CD81 activates the epithelial growth factor receptor (EGFR) signaling pathway (By similarity). Diffusion of the complex E1-E2-EGFR-SCARB1-CD81 to the cell lateral membrane allows further interaction with Claudin 1 (CLDN1) and occludin (OCLN) to finally trigger HCV entry (By similarity). Inhibits host EIF2AK2/PKR activation, preventing the establishment of an antiviral state (By similarity). Viral ligand for CD209/DC-SIGN and CLEC4M/DC-SIGNR, which are respectively found on dendritic cells (DCs), and on liver sinusoidal endothelial cells and macrophage-like cells of lymph node sinuses (By similarity). These interactions allow the capture of circulating HCV particles by these cells and subsequent facilitated transmission to permissive cells such as hepatocytes and lymphocyte subpopulations (By similarity). The interaction between E2 and host amino acid transporter complex formed by SLC3A2 and SLC7A5/LAT1 may facilitate viral entry into host cell (By similarity).</text>
</comment>
<comment type="function">
    <molecule>Viroporin p7</molecule>
    <text evidence="6 12 20">Ion channel protein that acts as a viroporin and plays an essential role in the assembly, envelopment and secretion of viral particles (By similarity). Regulates the host cell secretory pathway, which induces the intracellular retention of viral glycoproteins and favors assembly of viral particles (By similarity). Creates a pore in acidic organelles and releases Ca(2+) and H(+) in the cytoplasm of infected cells, leading to a productive viral infection (By similarity). High levels of cytoplasmic Ca(2+) may trigger membrane trafficking and transport of viral ER-associated proteins to viroplasms, sites of viral genome replication (Probable). This ionic imbalance induces the assembly of the inflammasome complex, which triggers the maturation of pro-IL-1beta into IL-1beta through the action of caspase-1 (By similarity). Targets also host mitochondria and induces mitochondrial depolarization (By similarity). In addition of its role as a viroporin, acts as a lipid raft adhesion factor (By similarity).</text>
</comment>
<comment type="function">
    <molecule>Protease NS2</molecule>
    <text evidence="4 6">Cysteine protease required for the proteolytic auto-cleavage between the non-structural proteins NS2 and NS3 (By similarity). The N-terminus of NS3 is required for the function of NS2 protease (active region NS2-3) (By similarity). Promotes the initiation of viral particle assembly by mediating the interaction between structural and non-structural proteins (By similarity).</text>
</comment>
<comment type="function">
    <molecule>Serine protease/helicase NS3</molecule>
    <text evidence="6 13">Displays three enzymatic activities: serine protease with a chymotrypsin-like fold, NTPase and RNA helicase (By similarity). NS3 serine protease, in association with NS4A, is responsible for the cleavages of NS3-NS4A, NS4A-NS4B, NS4B-NS5A and NS5A-NS5B (By similarity). The NS3/NS4A complex prevents phosphorylation of host IRF3, thus preventing the establishment of dsRNA induced antiviral state (By similarity). The NS3/NS4A complex induces host amino acid transporter component SLC3A2, thus contributing to HCV propagation (By similarity). NS3 RNA helicase binds to RNA and unwinds both dsDNA and dsRNA in the 3' to 5' direction, and likely resolves RNA complicated stable secondary structures in the template strand (By similarity). Binds a single ATP and catalyzes the unzipping of a single base pair of dsRNA (By similarity). Inhibits host antiviral proteins TBK1 and IRF3 thereby preventing the establishment of an antiviral state (By similarity). Cleaves host MAVS/CARDIF thereby preventing the establishment of an antiviral state (By similarity). Cleaves host TICAM1/TRIF, thereby disrupting TLR3 signaling and preventing the establishment of an antiviral state (By similarity).</text>
</comment>
<comment type="function">
    <molecule>Non-structural protein 4B</molecule>
    <text evidence="6">Induces a specific membrane alteration that serves as a scaffold for the virus replication complex (By similarity). This membrane alteration gives rise to the so-called ER-derived membranous web that contains the replication complex (By similarity). NS4B self-interaction contributes to its function in membranous web formation (By similarity). Promotes host TRIF protein degradation in a CASP8-dependent manner thereby inhibiting host TLR3-mediated interferon signaling (By similarity). Disrupts the interaction between STING and TBK1 contributing to the inhibition of interferon signaling (By similarity).</text>
</comment>
<comment type="function">
    <molecule>Non-structural protein 5A</molecule>
    <text evidence="3 5 6 12 13">Phosphorylated protein that is indispensable for viral replication and assembly (By similarity). Both hypo- and hyperphosphorylated states are required for the viral life cycle (By similarity). The hyperphosphorylated form of NS5A is an inhibitor of viral replication (By similarity). Involved in RNA-binding and especially in binding to the viral genome (By similarity). Zinc is essential for RNA-binding (By similarity). Participates in the viral particle production as a result of its interaction with the mature viral core protein (By similarity). Its interaction with host VAPB may target the viral replication complex to vesicles (By similarity). Down-regulates viral IRES translation initiation (By similarity). Mediates interferon resistance, presumably by interacting with and inhibiting host EIF2AK2/PKR (By similarity). Prevents BIN1-induced apoptosis (By similarity). Acts as a transcriptional activator of some host genes important for viral replication when localized in the nucleus (By similarity). Via the interaction with host PACSIN2, modulates lipid droplet formation in order to promote virion assembly (By similarity). Modulates TNFRSF21/DR6 signaling pathway for viral propagation (By similarity).</text>
</comment>
<comment type="function">
    <molecule>RNA-directed RNA polymerase</molecule>
    <text evidence="6">RNA-dependent RNA polymerase that performs primer-template recognition and RNA synthesis during viral replication. Initiates RNA transcription/replication at a flavin adenine dinucleotide (FAD), resulting in a 5'- FAD cap on viral RNAs. In this way, recognition of viral 5' RNA by host pattern recognition receptors can be bypassed, thereby evading activation of antiviral pathways.</text>
</comment>
<comment type="function">
    <molecule>Non-structural protein 4A</molecule>
    <text evidence="6 13">Peptide cofactor which forms a non-covalent complex with the N-terminal of NS3 serine protease (By similarity). The NS3/NS4A complex prevents phosphorylation of host IRF3, thus preventing the establishment of dsRNA induced antiviral state (By similarity). The NS3/NS4A complex induces host amino acid transporter component SLC3A2, thus contributing to HCV propagation (By similarity).</text>
</comment>
<comment type="catalytic activity">
    <molecule>Serine protease/helicase NS3</molecule>
    <reaction evidence="6">
        <text>Hydrolysis of four peptide bonds in the viral precursor polyprotein, commonly with Asp or Glu in the P6 position, Cys or Thr in P1 and Ser or Ala in P1'.</text>
        <dbReference type="EC" id="3.4.21.98"/>
    </reaction>
</comment>
<comment type="catalytic activity">
    <molecule>Serine protease/helicase NS3</molecule>
    <reaction evidence="6">
        <text>a ribonucleoside 5'-triphosphate + H2O = a ribonucleoside 5'-diphosphate + phosphate + H(+)</text>
        <dbReference type="Rhea" id="RHEA:23680"/>
        <dbReference type="ChEBI" id="CHEBI:15377"/>
        <dbReference type="ChEBI" id="CHEBI:15378"/>
        <dbReference type="ChEBI" id="CHEBI:43474"/>
        <dbReference type="ChEBI" id="CHEBI:57930"/>
        <dbReference type="ChEBI" id="CHEBI:61557"/>
        <dbReference type="EC" id="3.6.1.15"/>
    </reaction>
</comment>
<comment type="catalytic activity">
    <molecule>Serine protease/helicase NS3</molecule>
    <reaction evidence="6">
        <text>ATP + H2O = ADP + phosphate + H(+)</text>
        <dbReference type="Rhea" id="RHEA:13065"/>
        <dbReference type="ChEBI" id="CHEBI:15377"/>
        <dbReference type="ChEBI" id="CHEBI:15378"/>
        <dbReference type="ChEBI" id="CHEBI:30616"/>
        <dbReference type="ChEBI" id="CHEBI:43474"/>
        <dbReference type="ChEBI" id="CHEBI:456216"/>
        <dbReference type="EC" id="3.6.4.13"/>
    </reaction>
</comment>
<comment type="catalytic activity">
    <molecule>RNA-directed RNA polymerase</molecule>
    <reaction evidence="15">
        <text>RNA(n) + a ribonucleoside 5'-triphosphate = RNA(n+1) + diphosphate</text>
        <dbReference type="Rhea" id="RHEA:21248"/>
        <dbReference type="Rhea" id="RHEA-COMP:14527"/>
        <dbReference type="Rhea" id="RHEA-COMP:17342"/>
        <dbReference type="ChEBI" id="CHEBI:33019"/>
        <dbReference type="ChEBI" id="CHEBI:61557"/>
        <dbReference type="ChEBI" id="CHEBI:140395"/>
        <dbReference type="EC" id="2.7.7.48"/>
    </reaction>
</comment>
<comment type="cofactor">
    <molecule>Protease NS2</molecule>
    <cofactor evidence="4">
        <name>Zn(2+)</name>
        <dbReference type="ChEBI" id="CHEBI:29105"/>
    </cofactor>
    <text evidence="4">Activity of protease NS2 is dependent on zinc ions and completely inhibited by EDTA. This is probably due to the fact that NS2 protease activity needs NS3 N-terminus that binds a zinc atom (active region NS2-3).</text>
</comment>
<comment type="cofactor">
    <molecule>Serine protease/helicase NS3</molecule>
    <cofactor evidence="4">
        <name>Zn(2+)</name>
        <dbReference type="ChEBI" id="CHEBI:29105"/>
    </cofactor>
    <cofactor evidence="13">
        <name>Mg(2+)</name>
        <dbReference type="ChEBI" id="CHEBI:18420"/>
    </cofactor>
    <text evidence="4 13">Binds 1 zinc ion, which has a structural role (By similarity). The magnesium ion is essential for the helicase activity (By similarity).</text>
</comment>
<comment type="cofactor">
    <molecule>RNA-directed RNA polymerase</molecule>
    <cofactor evidence="4">
        <name>Mg(2+)</name>
        <dbReference type="ChEBI" id="CHEBI:18420"/>
    </cofactor>
    <text evidence="4">Binds 2 magnesium ion that constitute a dinuclear catalytic metal center.</text>
</comment>
<comment type="activity regulation">
    <text evidence="3 6">Inhibited by the antiviral drug hexamethylene amiloride (By similarity). Inhibition by amantadine appears to be genotype-dependent (By similarity). Also inhibited by long-alkyl-chain iminosugar derivatives (By similarity).</text>
</comment>
<comment type="activity regulation">
    <molecule>RNA-directed RNA polymerase</molecule>
    <text evidence="6">Activity is up-regulated by PRK2/PKN2-mediated phosphorylation.</text>
</comment>
<comment type="subunit">
    <molecule>Mature core protein</molecule>
    <text evidence="3 5 6 7 9 10 12">Homooligomer (By similarity). Interacts with E1 (via C-terminus) (By similarity). Interacts with the non-structural protein 5A (By similarity). Interacts (via N-terminus) with host STAT1 (via SH2 domain); this interaction results in decreased STAT1 phosphorylation and ubiquitin-mediated proteasome-dependent STAT1 degradation, leading to decreased IFN-stimulated gene transcription (By similarity). Interacts with host STAT3; this interaction constitutively activates STAT3 (By similarity). Interacts with host LTBR receptor (By similarity). Interacts with host TNFRSF1A receptor and possibly induces apoptosis (By similarity). Interacts with host HNRPK (By similarity). Interacts with host YWHAE (By similarity). Interacts with host UBE3A/E6AP (By similarity). Interacts with host DDX3X (By similarity). Interacts with host APOA2 (By similarity). Interacts with host RXRA protein (By similarity). Interacts with host SP110 isoform 3/Sp110b; this interaction sequesters the transcriptional corepressor SP110 away from the nucleus (By similarity). Interacts with host CREB3 nuclear transcription protein; this interaction triggers cell transformation (By similarity). Interacts with host ACY3 (By similarity). Interacts with host C1QR1 (By similarity). Interacts with host RBM24; this interaction, which enhances the interaction of the mature core protein with 5'-UTR, may inhibit viral translation and favor replication (By similarity). Interacts with host EIF2AK2/PKR; this interaction induces the autophosphorylation of EIF2AK2 (By similarity). Part of the viral assembly initiation complex composed of NS2, E1, E2, NS3, NS4A, NS5A and the mature core protein (By similarity).</text>
</comment>
<comment type="subunit">
    <molecule>Envelope glycoprotein E1</molecule>
    <text evidence="6 12">Forms a heterodimer with envelope glycoprotein E2 (By similarity). Interacts with mature core protein (By similarity). Interacts with protease NS2 (By similarity). The heterodimer E1/E2 interacts with host CLDN1; this interaction plays a role in viral entry into host cell (By similarity). Interacts with host SPSB2 (via C-terminus) (By similarity). Part of the viral assembly initiation complex composed of NS2, E1, E2, NS3, NS4A, NS5A and the mature core protein (By similarity). Interacts with host NEURL3; this interaction prevents E1 binding to glycoprotein E2 (By similarity).</text>
</comment>
<comment type="subunit">
    <molecule>Envelope glycoprotein E2</molecule>
    <text evidence="6 12 13">Forms a heterodimer with envelope glycoprotein E1 (By similarity). Interacts with host CD81 and SCARB1 receptors; these interactions play a role in viral entry into host cell (By similarity). Interacts with host EIF2AK2/PKR; this interaction inhibits EIF2AK2 and probably allows the virus to evade the innate immune response (By similarity). Interacts with host CD209/DC-SIGN and CLEC4M/DC-SIGNR (By similarity). Interact with host SPCS1; this interaction is essential for viral particle assembly (By similarity). Interacts with protease NS2 (By similarity). The heterodimer E1/E2 interacts with host CLDN1; this interaction plays a role in viral entry into host cell (By similarity). Part of the viral assembly initiation complex composed of NS2, E1, E2, NS3, NS4A, NS5A and the mature core protein (By similarity). Interacts with host SLC3A2/4F2hc; the interaction may facilitate viral entry into host cell (By similarity). Interacts with human PLSCR1 (By similarity).</text>
</comment>
<comment type="subunit">
    <molecule>Viroporin p7</molecule>
    <text evidence="2 6 12">Homohexamer (By similarity). Homoheptamer (By similarity). Interacts with protease NS2 (By similarity).</text>
</comment>
<comment type="subunit">
    <molecule>Protease NS2</molecule>
    <text evidence="6 12">Homodimer (By similarity). Interacts with host SPCS1; this interaction is essential for viral particle assembly (By similarity). Interacts with envelope glycoprotein E1 (By similarity). Interacts with envelope glycoprotein E2 (By similarity). Interacts with viroporin p7 (By similarity). Interacts with serine protease/helicase NS3 (By similarity). Part of the replication complex composed of NS2, NS3, NS4A, NS4B, NS5A and the RNA-directed RNA polymerase embedded in an ER-derived membranous web (By similarity). Part of the viral assembly initiation complex composed of NS2, E1, E2, NS3, NS4A, NS5A and the mature core protein (By similarity).</text>
</comment>
<comment type="subunit">
    <molecule>Serine protease/helicase NS3</molecule>
    <text evidence="4 6 12 13">Interacts with protease NS2 (By similarity). Interacts with non-structural protein 4A; this interaction stabilizes the folding of NS3 serine protease (By similarity). NS3-NS4A interaction is essential for NS3 activation and allows membrane anchorage of the latter (By similarity). NS3/NS4A complex also prevents phosphorylation of host IRF3, thus preventing the establishment of dsRNA induced antiviral state (By similarity). Interacts with host MAVS; this interaction leads to the cleavage and inhibition of host MAVS (By similarity). Interacts with host TICAM1; this interaction leads to the cleavage and inhibition of host TICAM1 (By similarity). Interacts with host TANK-binding kinase/TBK1; this interaction results in the inhibition of the association between TBK1 and IRF3, which leads to the inhibition of IRF3 activation (By similarity). Interacts with host RBM24 (By similarity). Part of the replication complex composed of NS2, NS3, NS4A, NS4B, NS5A and the RNA-directed RNA polymerase embedded in an ER-derived membranous web (By similarity). Part of the viral assembly initiation complex composed of NS2, E1, E2, NS3, NS4A, NS5A and the mature core protein (By similarity).</text>
</comment>
<comment type="subunit">
    <molecule>Non-structural protein 4A</molecule>
    <text evidence="3 4 6 12">Interacts with NS3 serine protease; this interaction stabilizes the folding of NS3 serine protease (By similarity). NS3-NS4A interaction is essential for NS3 activation and allows membrane anchorage of the latter (By similarity). Interacts with non-structural protein 5A (via N-terminus) (By similarity). Part of the replication complex composed of NS2, NS3, NS4A, NS4B, NS5A and the RNA-directed RNA polymerase embedded in an ER-derived membranous web (By similarity). Part of the viral assembly initiation complex composed of NS2, E1, E2, NS3, NS4A, NS5A and the mature core protein (By similarity).</text>
</comment>
<comment type="subunit">
    <molecule>Non-structural protein 4B</molecule>
    <text evidence="6 12">Homomultimer (By similarity). Interacts with non-structural protein NS5A (By similarity). Interacts with host PLA2G4C; this interaction likely initiates the recruitment of replication complexes to lipid droplets (By similarity). Interacts with host STING; this interaction disrupts the interaction between STING and TBK1 thereby suppressing the interferon signaling (By similarity). Part of the replication complex composed of NS2, NS3, NS4A, NS4B, NS5A and the RNA-directed RNA polymerase embedded in an ER-derived membranous web (By similarity).</text>
</comment>
<comment type="subunit">
    <molecule>Non-structural protein 5A</molecule>
    <text evidence="3 4 5 6 12">Monomer. Homodimer; dimerization is required for RNA-binding (By similarity). Interacts with the mature core protein (By similarity). Interacts (via N-terminus) with non-structural protein 4A (By similarity). Interacts with non-structural protein 4B. Interacts (via region D2) with RNA-directed RNA polymerase (By similarity). Part of the viral assembly initiation complex composed of NS2, E1, E2, NS3, NS4A, NS5A and the mature core protein (By similarity). Part of the replication complex composed of NS2, NS3, NS4A, NS4B, NS5A and the RNA-directed RNA polymerase embedded in an ER-derived membranous web (By similarity). Interacts with host GRB2 (By similarity). Interacts with host BIN1 (By similarity). Interacts with host PIK3R1 (By similarity). Interacts with host SRCAP (By similarity). Interacts with host FKBP8 (By similarity). Interacts (via C-terminus) with host VAPB (via MSP domain). Interacts with host EIF2AK2/PKR; this interaction leads to disruption of EIF2AK2 dimerization by NS5A and probably allows the virus to evade the innate immune response. Interacts (via N-terminus) with host PACSIN2 (via N-terminus); this interaction attenuates protein kinase C alpha-mediated phosphorylation of PACSIN2 by disrupting the interaction between PACSIN2 and PRKCA (By similarity). Interacts (via N-terminus) with host SRC kinase (via SH2 domain) (By similarity). Interacts with most Src-family kinases (By similarity). Interacts with host IFI27 and SKP2; promotes the ubiquitin-mediated proteasomal degradation of NS5A (By similarity). Interacts with host GPS2 (By similarity). Interacts with host TNFRSF21; this interaction allows the modulation by the virus of JNK, p38 MAPK, STAT3, and Akt signaling pathways in a DR6-dependent manner. Interacts (via N-terminus) with host CIDEB (via N-terminus); this interaction seems to regulate the association of HCV particles with APOE (By similarity). Interacts with host CHKA/Choline Kinase-alpha; CHKA bridges host PI4KA and NS5A and potentiates NS5A-stimulated PI4KA activity, which then facilitates the targeting of the ternary complex to the ER for viral replication (By similarity). Interacts with host SPSB2 (via C-terminus); this interaction targets NS5A for ubiquitination and degradation (By similarity). Interacts with host RAB18; this interaction may promote the association of NS5A and other replicase components with lipid droplets (By similarity). Interacts (via region D2) with host PPIA/CYPA; the interaction stimulates RNA-binding ability of NS5A and is dependent on the peptidyl-prolyl cis-trans isomerase activity of PPIA/CYPA. Interacts with host TRIM14; this interaction induces the degradation of NS5A (By similarity).</text>
</comment>
<comment type="subunit">
    <molecule>RNA-directed RNA polymerase</molecule>
    <text evidence="6">Homooligomer (By similarity). Interacts with non-structural protein 5A (By similarity). Interacts with host VAPB (By similarity). Interacts with host PRK2/PKN2 (By similarity). Interacts with host HNRNPA1 and SEPT6; these interactions facilitate viral replication (By similarity). Part of the replication complex composed of NS2, NS3, NS4A, NS4B, NS5A and the RNA-directed RNA polymerase (By similarity).</text>
</comment>
<comment type="subcellular location">
    <molecule>Core protein precursor</molecule>
    <subcellularLocation>
        <location evidence="5">Host endoplasmic reticulum membrane</location>
        <topology evidence="14">Single-pass membrane protein</topology>
    </subcellularLocation>
    <subcellularLocation>
        <location evidence="5">Host mitochondrion membrane</location>
        <topology evidence="14">Single-pass type I membrane protein</topology>
    </subcellularLocation>
    <text>The C-terminal transmembrane domain of the core protein precursor contains an ER signal leading the nascent polyprotein to the ER membrane.</text>
</comment>
<comment type="subcellular location">
    <molecule>Mature core protein</molecule>
    <subcellularLocation>
        <location evidence="12">Virion</location>
    </subcellularLocation>
    <subcellularLocation>
        <location evidence="12">Host cytoplasm</location>
    </subcellularLocation>
    <subcellularLocation>
        <location evidence="3">Host nucleus</location>
    </subcellularLocation>
    <subcellularLocation>
        <location evidence="12">Host lipid droplet</location>
    </subcellularLocation>
    <text evidence="6">Only a minor proportion of core protein is present in the nucleus (By similarity). Probably present on the surface of lipid droplets (By similarity).</text>
</comment>
<comment type="subcellular location">
    <molecule>Envelope glycoprotein E1</molecule>
    <subcellularLocation>
        <location evidence="20">Virion membrane</location>
        <topology evidence="20">Single-pass type I membrane protein</topology>
    </subcellularLocation>
    <subcellularLocation>
        <location>Host endoplasmic reticulum membrane</location>
        <topology evidence="6">Single-pass type I membrane protein</topology>
    </subcellularLocation>
    <text evidence="6">The C-terminal transmembrane domain acts as a signal sequence and forms a hairpin structure before cleavage by host signal peptidase (By similarity). After cleavage, the membrane sequence is retained at the C-terminus of the protein, serving as ER membrane anchor (By similarity). A reorientation of the second hydrophobic stretch occurs after cleavage producing a single reoriented transmembrane domain (By similarity). These events explain the final topology of the protein (By similarity).</text>
</comment>
<comment type="subcellular location">
    <molecule>Envelope glycoprotein E2</molecule>
    <subcellularLocation>
        <location evidence="20">Virion membrane</location>
        <topology evidence="20">Single-pass type I membrane protein</topology>
    </subcellularLocation>
    <subcellularLocation>
        <location>Host endoplasmic reticulum membrane</location>
        <topology evidence="6">Single-pass type I membrane protein</topology>
    </subcellularLocation>
    <subcellularLocation>
        <location evidence="13">Host lipid droplet</location>
    </subcellularLocation>
    <text evidence="6">The C-terminal transmembrane domain acts as a signal sequence and forms a hairpin structure before cleavage by host signal peptidase (By similarity). After cleavage, the membrane sequence is retained at the C-terminus of the protein, serving as ER membrane anchor (By similarity). A reorientation of the second hydrophobic stretch occurs after cleavage producing a single reoriented transmembrane domain (By similarity). These events explain the final topology of the protein (By similarity).</text>
</comment>
<comment type="subcellular location">
    <molecule>Viroporin p7</molecule>
    <subcellularLocation>
        <location evidence="6">Host endoplasmic reticulum membrane</location>
        <topology evidence="6">Multi-pass membrane protein</topology>
    </subcellularLocation>
    <subcellularLocation>
        <location evidence="6">Host mitochondrion</location>
    </subcellularLocation>
    <subcellularLocation>
        <location evidence="6">Host cell membrane</location>
    </subcellularLocation>
    <text evidence="6">The C-terminus of p7 membrane domain acts as a signal sequence (By similarity). After cleavage by host signal peptidase, the membrane sequence is retained at the C-terminus of the protein, serving as ER membrane anchor (By similarity). ER retention of p7 is leaky and a small fraction reaches the plasma membrane (By similarity).</text>
</comment>
<comment type="subcellular location">
    <molecule>Protease NS2</molecule>
    <subcellularLocation>
        <location evidence="6">Host endoplasmic reticulum membrane</location>
        <topology evidence="6">Multi-pass membrane protein</topology>
    </subcellularLocation>
    <subcellularLocation>
        <location evidence="13">Host lipid droplet</location>
    </subcellularLocation>
    <text evidence="12">Probably present on the surface of lipid droplets.</text>
</comment>
<comment type="subcellular location">
    <molecule>Serine protease/helicase NS3</molecule>
    <subcellularLocation>
        <location evidence="20">Host endoplasmic reticulum membrane</location>
        <topology evidence="20">Peripheral membrane protein</topology>
    </subcellularLocation>
    <text evidence="20">NS3 is associated to the ER membrane through its binding to NS4A.</text>
</comment>
<comment type="subcellular location">
    <molecule>Non-structural protein 4A</molecule>
    <subcellularLocation>
        <location evidence="20">Host endoplasmic reticulum membrane</location>
        <topology evidence="20">Single-pass type I membrane protein</topology>
    </subcellularLocation>
    <text>Host membrane insertion occurs after processing by the NS3 protease.</text>
</comment>
<comment type="subcellular location">
    <molecule>Non-structural protein 4B</molecule>
    <subcellularLocation>
        <location evidence="6">Host endoplasmic reticulum membrane</location>
        <topology evidence="6">Multi-pass membrane protein</topology>
    </subcellularLocation>
    <text evidence="6">A reorientation of the N-terminus into the ER lumen occurs post-translationally.</text>
</comment>
<comment type="subcellular location">
    <molecule>Non-structural protein 5A</molecule>
    <subcellularLocation>
        <location evidence="6">Host endoplasmic reticulum membrane</location>
        <topology evidence="6">Peripheral membrane protein</topology>
    </subcellularLocation>
    <subcellularLocation>
        <location evidence="6">Host cytoplasm</location>
        <location evidence="6">Host perinuclear region</location>
    </subcellularLocation>
    <subcellularLocation>
        <location evidence="3">Host mitochondrion</location>
    </subcellularLocation>
    <subcellularLocation>
        <location evidence="6">Host cytoplasm</location>
    </subcellularLocation>
    <subcellularLocation>
        <location evidence="3">Host nucleus</location>
    </subcellularLocation>
    <subcellularLocation>
        <location evidence="13">Host lipid droplet</location>
    </subcellularLocation>
    <text evidence="3 6">Host membrane insertion occurs after processing by the NS3 protease (By similarity). Localizes at the surface of lipid droplets (By similarity).</text>
</comment>
<comment type="subcellular location">
    <molecule>RNA-directed RNA polymerase</molecule>
    <subcellularLocation>
        <location evidence="6">Host cytoplasm</location>
    </subcellularLocation>
    <subcellularLocation>
        <location>Host endoplasmic reticulum membrane</location>
        <topology evidence="6">Single-pass type IV membrane protein</topology>
    </subcellularLocation>
    <text evidence="6">Host membrane insertion occurs after processing by the NS3 protease.</text>
</comment>
<comment type="domain">
    <molecule>Envelope glycoprotein E1</molecule>
    <text evidence="6">The transmembrane regions of envelope E1 and E2 glycoproteins are involved in heterodimer formation, ER localization, and assembly of these proteins.</text>
</comment>
<comment type="domain">
    <molecule>Envelope glycoprotein E2</molecule>
    <text evidence="4 6">The transmembrane regions of envelope E1 and E2 glycoproteins are involved in heterodimer formation, ER localization, and assembly of these proteins (By similarity). Envelope E2 glycoprotein contain two highly variable regions called hypervariable region 1 and 2 (HVR1 and HVR2) (By similarity). E2 also contain two segments involved in CD81-binding (By similarity). HVR1 is implicated in the SCARB1-mediated cell entry and probably acts as a regulator of the association of particles with lipids (By similarity).</text>
</comment>
<comment type="domain">
    <molecule>Protease NS2</molecule>
    <text evidence="4">The N-terminus of NS3 is required for the catalytic activity of protease NS2 (By similarity). The minimal catalytic region includes the C-terminus of NS2 and the N-terminus NS3 protease domain (active region NS2-3) (By similarity).</text>
</comment>
<comment type="domain">
    <molecule>Serine protease/helicase NS3</molecule>
    <text evidence="3 6">The N-terminal one-third contains the protease activity (By similarity). This region contains a zinc atom that does not belong to the active site, but may play a structural rather than a catalytic role (By similarity). This region is essential for the activity of protease NS2, maybe by contributing to the folding of the latter (By similarity). The NTPase/helicase activity is located in the twothirds C-terminus of NS3, this domain contains the NTPase and RNA-binding regions (By similarity).</text>
</comment>
<comment type="domain">
    <molecule>Non-structural protein 4B</molecule>
    <text evidence="12">Contains a glycine zipper region that critically contributes to the biogenesis of functional ER-derived replication organelles.</text>
</comment>
<comment type="domain">
    <molecule>Non-structural protein 5A</molecule>
    <text evidence="3 6">The N-terminus of NS5A acts as membrane anchor (By similarity). The central part of NS5A contains a variable region called interferon sensitivity determining region (ISDR) and seems to be intrinsically disordered and interacts with NS5B and host EIF2AK2 (By similarity). The C-terminus of NS5A contains a variable region called variable region 3 (V3) (By similarity). ISDR and V3 may be involved in sensitivity and/or resistance to IFN-alpha therapy (By similarity). The C-terminus contains a nuclear localization signal (By similarity). The SH3-binding domain is involved in the interaction with host BIN1, GRB2 and Src-family kinases (By similarity).</text>
</comment>
<comment type="PTM">
    <molecule>Genome polyprotein</molecule>
    <text evidence="5 6">Specific enzymatic cleavages in vivo yield mature proteins (By similarity). The structural proteins, core, E1, E2 and p7 are produced by proteolytic processing by host signal peptidases (By similarity). The core protein precursor is synthesized as a 23 kDa, which is retained in the ER membrane through the hydrophobic signal peptide (By similarity). Cleavage by the signal peptidase releases the 21 kDa mature core protein (By similarity). The cleavage of the core protein precursor occurs between aminoacids 176 and 188 but the exact cleavage site is not known (By similarity). Some degraded forms of the core protein appear as well during the course of infection (By similarity). The other proteins (p7, NS2, NS3, NS4A, NS4B, NS5A and NS5B) are cleaved by the viral proteases (By similarity). Autoprocessing between NS2 and NS3 is mediated by the NS2 cysteine protease catalytic domain and regulated by the NS3 N-terminal domain (By similarity).</text>
</comment>
<comment type="PTM">
    <molecule>Mature core protein</molecule>
    <text evidence="8">Phosphorylated by host PKC and PKA.</text>
</comment>
<comment type="PTM">
    <molecule>Mature core protein</molecule>
    <text evidence="9">Ubiquitinated; mediated by UBE3A and leading to core protein subsequent proteasomal degradation.</text>
</comment>
<comment type="PTM">
    <molecule>Envelope glycoprotein E1</molecule>
    <text evidence="6">Highly N-glycosylated.</text>
</comment>
<comment type="PTM">
    <molecule>Envelope glycoprotein E2</molecule>
    <text evidence="6">Highly N-glycosylated.</text>
</comment>
<comment type="PTM">
    <molecule>Protease NS2</molecule>
    <text evidence="6">Palmitoylation is required for NS2/3 autoprocessing and E2 recruitment to membranes.</text>
</comment>
<comment type="PTM">
    <molecule>Non-structural protein 4B</molecule>
    <text evidence="6">Palmitoylated. This modification may play a role in its polymerization or in protein-protein interactions.</text>
</comment>
<comment type="PTM">
    <molecule>Non-structural protein 5A</molecule>
    <text evidence="3 5">Phosphorylated on serines in a basal form termed p56 (By similarity). p58 is a hyperphosphorylated form of p56 (By similarity). p56 and p58 coexist in the cell in roughly equivalent amounts (By similarity). Hyperphosphorylation is dependent on the presence of NS4A (By similarity). Host CSNK1A1/CKI-alpha or RPS6KB1 kinases may be responsible for NS5A phosphorylation (By similarity).</text>
</comment>
<comment type="PTM">
    <molecule>Non-structural protein 5A</molecule>
    <text evidence="12">Tyrosine phosphorylation is essential for the interaction with host SRC.</text>
</comment>
<comment type="PTM">
    <molecule>Non-structural protein 5A</molecule>
    <text evidence="6">Ubiquitinated (By similarity). Ubiquitination, most probably at Lys-2350, mediated by host IFI27 and SKP2 leads to proteasomal degradation, restricting viral infection (By similarity). Ubiquitination by host TRIM22 leads to interruption of viral replication (By similarity).</text>
</comment>
<comment type="PTM">
    <molecule>RNA-directed RNA polymerase</molecule>
    <text evidence="3">The N-terminus is phosphorylated by host PRK2/PKN2.</text>
</comment>
<comment type="miscellaneous">
    <text evidence="20">Viral particle assembly takes place at the surface of ER-derived membranes in close proximity to lipid droplets. NS2 associates with E1/E2 glycoproteins, NS3 and NS5A, which interacts with the viral RNA and core protein to promote genome encapsidation. The nucleocapsid buds at the ER membrane where E1/E2 glycoproteins are anchored and afterward associate with nascent lipid droplet to acquire APOE and APOC. Secretion of viral particles is probably regulated by viroporin p7.</text>
</comment>
<comment type="miscellaneous">
    <molecule>Non-structural protein 5A</molecule>
    <text evidence="20">Cell culture adaptation of the virus leads to mutations in NS5A, reducing its inhibitory effect on replication.</text>
</comment>
<comment type="miscellaneous">
    <molecule>Mature core protein</molecule>
    <text evidence="3">Exerts viral interference on hepatitis B virus when HCV and HBV coinfect the same cell, by suppressing HBV gene expression, RNA encapsidation and budding.</text>
</comment>
<comment type="similarity">
    <text evidence="20">Belongs to the hepacivirus polyprotein family.</text>
</comment>
<comment type="caution">
    <text evidence="20">The core gene probably also codes for alternative reading frame proteins (ARFPs). Many functions depicted for the core protein might belong to the ARFPs.</text>
</comment>
<name>POLG_HCVJT</name>
<organism>
    <name type="scientific">Hepatitis C virus genotype 1b (isolate HC-JT)</name>
    <name type="common">HCV</name>
    <dbReference type="NCBI Taxonomy" id="31642"/>
    <lineage>
        <taxon>Viruses</taxon>
        <taxon>Riboviria</taxon>
        <taxon>Orthornavirae</taxon>
        <taxon>Kitrinoviricota</taxon>
        <taxon>Flasuviricetes</taxon>
        <taxon>Amarillovirales</taxon>
        <taxon>Flaviviridae</taxon>
        <taxon>Hepacivirus</taxon>
        <taxon>Hepacivirus hominis</taxon>
    </lineage>
</organism>
<proteinExistence type="inferred from homology"/>
<reference key="1">
    <citation type="journal article" date="1992" name="Virus Res.">
        <title>Molecular cloning of hepatitis C virus genome from a single Japanese carrier: sequence variation within the same individual and among infected individuals.</title>
        <authorList>
            <person name="Tanaka T."/>
            <person name="Kato N."/>
            <person name="Nakagawa M."/>
            <person name="Ootsuyama Y."/>
            <person name="Cho M.J."/>
            <person name="Nakazawa T."/>
            <person name="Hijikata M."/>
            <person name="Ishimura Y."/>
            <person name="Shimotohno K."/>
        </authorList>
    </citation>
    <scope>NUCLEOTIDE SEQUENCE [GENOMIC RNA]</scope>
</reference>
<reference key="2">
    <citation type="journal article" date="2000" name="J. Viral Hepat.">
        <title>Properties of the hepatitis C virus core protein: a structural protein that modulates cellular processes.</title>
        <authorList>
            <person name="McLauchlan J."/>
        </authorList>
    </citation>
    <scope>REVIEW</scope>
</reference>
<reference key="3">
    <citation type="journal article" date="2004" name="Hepatology">
        <title>Structural biology of hepatitis C virus.</title>
        <authorList>
            <person name="Penin F."/>
            <person name="Dubuisson J."/>
            <person name="Rey F.A."/>
            <person name="Moradpour D."/>
            <person name="Pawlotsky J.-M."/>
        </authorList>
    </citation>
    <scope>REVIEW</scope>
</reference>
<feature type="initiator methionine" description="Removed; by host" evidence="5">
    <location>
        <position position="1"/>
    </location>
</feature>
<feature type="chain" id="PRO_0000450920" description="Genome polyprotein">
    <location>
        <begin position="2"/>
        <end position="3010"/>
    </location>
</feature>
<feature type="chain" id="PRO_0000037649" description="Core protein precursor">
    <location>
        <begin position="2"/>
        <end position="191"/>
    </location>
</feature>
<feature type="chain" id="PRO_0000037650" description="Mature core protein">
    <location>
        <begin position="2"/>
        <end position="177"/>
    </location>
</feature>
<feature type="propeptide" id="PRO_0000037651" description="ER anchor for the core protein, removed in mature form by host signal peptidase">
    <location>
        <begin position="178"/>
        <end position="191"/>
    </location>
</feature>
<feature type="chain" id="PRO_0000037652" description="Envelope glycoprotein E1">
    <location>
        <begin position="192"/>
        <end position="383"/>
    </location>
</feature>
<feature type="chain" id="PRO_0000037653" description="Envelope glycoprotein E2">
    <location>
        <begin position="384"/>
        <end position="746"/>
    </location>
</feature>
<feature type="chain" id="PRO_0000037654" description="Viroporin p7">
    <location>
        <begin position="747"/>
        <end position="809"/>
    </location>
</feature>
<feature type="chain" id="PRO_0000037655" description="Protease NS2" evidence="17">
    <location>
        <begin position="810"/>
        <end position="1026"/>
    </location>
</feature>
<feature type="chain" id="PRO_0000037656" description="Serine protease/helicase NS3">
    <location>
        <begin position="1027"/>
        <end position="1657"/>
    </location>
</feature>
<feature type="chain" id="PRO_0000037657" description="Non-structural protein 4A">
    <location>
        <begin position="1658"/>
        <end position="1711"/>
    </location>
</feature>
<feature type="chain" id="PRO_0000037658" description="Non-structural protein 4B">
    <location>
        <begin position="1712"/>
        <end position="1972"/>
    </location>
</feature>
<feature type="chain" id="PRO_0000037659" description="Non-structural protein 5A">
    <location>
        <begin position="1973"/>
        <end position="2419"/>
    </location>
</feature>
<feature type="chain" id="PRO_0000037660" description="RNA-directed RNA polymerase">
    <location>
        <begin position="2420"/>
        <end position="3010"/>
    </location>
</feature>
<feature type="topological domain" description="Cytoplasmic" evidence="14">
    <location>
        <begin position="2"/>
        <end position="168"/>
    </location>
</feature>
<feature type="transmembrane region" description="Helical" evidence="14">
    <location>
        <begin position="169"/>
        <end position="189"/>
    </location>
</feature>
<feature type="topological domain" description="Lumenal" evidence="6">
    <location>
        <begin position="190"/>
        <end position="358"/>
    </location>
</feature>
<feature type="transmembrane region" description="Helical" evidence="6">
    <location>
        <begin position="359"/>
        <end position="379"/>
    </location>
</feature>
<feature type="topological domain" description="Lumenal" evidence="6">
    <location>
        <begin position="380"/>
        <end position="725"/>
    </location>
</feature>
<feature type="transmembrane region" description="Helical" evidence="6">
    <location>
        <begin position="726"/>
        <end position="746"/>
    </location>
</feature>
<feature type="topological domain" description="Lumenal" evidence="6">
    <location>
        <begin position="747"/>
        <end position="757"/>
    </location>
</feature>
<feature type="transmembrane region" description="Helical" evidence="6">
    <location>
        <begin position="758"/>
        <end position="778"/>
    </location>
</feature>
<feature type="topological domain" description="Cytoplasmic" evidence="6">
    <location>
        <begin position="779"/>
        <end position="781"/>
    </location>
</feature>
<feature type="transmembrane region" description="Helical" evidence="6">
    <location>
        <begin position="782"/>
        <end position="803"/>
    </location>
</feature>
<feature type="topological domain" description="Lumenal" evidence="6">
    <location>
        <begin position="804"/>
        <end position="813"/>
    </location>
</feature>
<feature type="transmembrane region" description="Helical" evidence="13">
    <location>
        <begin position="814"/>
        <end position="834"/>
    </location>
</feature>
<feature type="topological domain" description="Cytoplasmic" evidence="13">
    <location>
        <begin position="835"/>
        <end position="838"/>
    </location>
</feature>
<feature type="transmembrane region" description="Helical" evidence="13">
    <location>
        <begin position="839"/>
        <end position="859"/>
    </location>
</feature>
<feature type="topological domain" description="Lumenal" evidence="13">
    <location>
        <begin position="860"/>
        <end position="881"/>
    </location>
</feature>
<feature type="transmembrane region" description="Helical" evidence="13">
    <location>
        <begin position="882"/>
        <end position="902"/>
    </location>
</feature>
<feature type="topological domain" description="Cytoplasmic" evidence="13">
    <location>
        <begin position="903"/>
        <end position="1657"/>
    </location>
</feature>
<feature type="transmembrane region" description="Helical" evidence="14">
    <location>
        <begin position="1658"/>
        <end position="1678"/>
    </location>
</feature>
<feature type="topological domain" description="Cytoplasmic" evidence="14">
    <location>
        <begin position="1679"/>
        <end position="1805"/>
    </location>
</feature>
<feature type="transmembrane region" description="Helical" evidence="14">
    <location>
        <begin position="1806"/>
        <end position="1824"/>
    </location>
</feature>
<feature type="topological domain" description="Lumenal" evidence="6">
    <location>
        <begin position="1825"/>
        <end position="1828"/>
    </location>
</feature>
<feature type="transmembrane region" description="Helical" evidence="14">
    <location>
        <begin position="1829"/>
        <end position="1849"/>
    </location>
</feature>
<feature type="topological domain" description="Cytoplasmic" evidence="14">
    <location>
        <position position="1850"/>
    </location>
</feature>
<feature type="transmembrane region" description="Helical" evidence="14">
    <location>
        <begin position="1851"/>
        <end position="1871"/>
    </location>
</feature>
<feature type="topological domain" description="Lumenal" evidence="14">
    <location>
        <begin position="1872"/>
        <end position="1881"/>
    </location>
</feature>
<feature type="transmembrane region" description="Helical" evidence="14">
    <location>
        <begin position="1882"/>
        <end position="1902"/>
    </location>
</feature>
<feature type="topological domain" description="Cytoplasmic" evidence="14">
    <location>
        <begin position="1903"/>
        <end position="1972"/>
    </location>
</feature>
<feature type="intramembrane region" evidence="6">
    <location>
        <begin position="1973"/>
        <end position="2002"/>
    </location>
</feature>
<feature type="topological domain" description="Cytoplasmic" evidence="6">
    <location>
        <begin position="2003"/>
        <end position="2989"/>
    </location>
</feature>
<feature type="transmembrane region" description="Helical" evidence="6">
    <location>
        <begin position="2990"/>
        <end position="3010"/>
    </location>
</feature>
<feature type="domain" description="Peptidase C18" evidence="17">
    <location>
        <begin position="903"/>
        <end position="1026"/>
    </location>
</feature>
<feature type="domain" description="Peptidase S29" evidence="18">
    <location>
        <begin position="1027"/>
        <end position="1208"/>
    </location>
</feature>
<feature type="domain" description="Helicase ATP-binding" evidence="16">
    <location>
        <begin position="1217"/>
        <end position="1369"/>
    </location>
</feature>
<feature type="domain" description="RdRp catalytic" evidence="15">
    <location>
        <begin position="2633"/>
        <end position="2751"/>
    </location>
</feature>
<feature type="region of interest" description="Disordered" evidence="6">
    <location>
        <begin position="2"/>
        <end position="75"/>
    </location>
</feature>
<feature type="region of interest" description="Interaction with DDX3X" evidence="10">
    <location>
        <begin position="2"/>
        <end position="59"/>
    </location>
</feature>
<feature type="region of interest" description="Interaction with EIF2AK2/PKR" evidence="3">
    <location>
        <begin position="2"/>
        <end position="58"/>
    </location>
</feature>
<feature type="region of interest" description="Interaction with STAT1" evidence="3">
    <location>
        <begin position="2"/>
        <end position="23"/>
    </location>
</feature>
<feature type="region of interest" description="Important for endoplasmic reticulum and mitochondrial localization" evidence="3">
    <location>
        <begin position="112"/>
        <end position="152"/>
    </location>
</feature>
<feature type="region of interest" description="Interaction with APOA2" evidence="7">
    <location>
        <begin position="122"/>
        <end position="173"/>
    </location>
</feature>
<feature type="region of interest" description="Important for lipid droplets localization" evidence="6">
    <location>
        <begin position="164"/>
        <end position="167"/>
    </location>
</feature>
<feature type="region of interest" description="Important for fusion" evidence="6">
    <location>
        <begin position="265"/>
        <end position="296"/>
    </location>
</feature>
<feature type="region of interest" description="HVR1" evidence="6">
    <location>
        <begin position="385"/>
        <end position="411"/>
    </location>
</feature>
<feature type="region of interest" description="HVR2" evidence="6">
    <location>
        <begin position="474"/>
        <end position="479"/>
    </location>
</feature>
<feature type="region of interest" description="CD81-binding 1" evidence="4">
    <location>
        <begin position="480"/>
        <end position="493"/>
    </location>
</feature>
<feature type="region of interest" description="CD81-binding 2" evidence="4">
    <location>
        <begin position="544"/>
        <end position="551"/>
    </location>
</feature>
<feature type="region of interest" description="PKR/eIF2-alpha phosphorylation homology domain (PePHD)" evidence="1">
    <location>
        <begin position="660"/>
        <end position="671"/>
    </location>
</feature>
<feature type="region of interest" description="Protease NS2-3" evidence="4">
    <location>
        <begin position="904"/>
        <end position="1206"/>
    </location>
</feature>
<feature type="region of interest" description="Interaction with host SCPS1" evidence="12">
    <location>
        <begin position="929"/>
        <end position="949"/>
    </location>
</feature>
<feature type="region of interest" description="RNA-binding" evidence="4">
    <location>
        <begin position="1486"/>
        <end position="1497"/>
    </location>
</feature>
<feature type="region of interest" description="NS3-binding" evidence="6">
    <location>
        <begin position="1679"/>
        <end position="1690"/>
    </location>
</feature>
<feature type="region of interest" description="Transcriptional activation" evidence="14">
    <location>
        <begin position="2120"/>
        <end position="2332"/>
    </location>
</feature>
<feature type="region of interest" description="FKBP8-binding" evidence="3">
    <location>
        <begin position="2120"/>
        <end position="2208"/>
    </location>
</feature>
<feature type="region of interest" description="Interaction with non-structural protein 4A" evidence="3">
    <location>
        <begin position="2135"/>
        <end position="2139"/>
    </location>
</feature>
<feature type="region of interest" description="Disordered" evidence="19">
    <location>
        <begin position="2187"/>
        <end position="2220"/>
    </location>
</feature>
<feature type="region of interest" description="Interaction with host SKP2" evidence="6">
    <location>
        <begin position="2189"/>
        <end position="2441"/>
    </location>
</feature>
<feature type="region of interest" description="Interaction with EIF2AK2/PKR" evidence="4">
    <location>
        <begin position="2210"/>
        <end position="2275"/>
    </location>
</feature>
<feature type="region of interest" description="ISDR" evidence="3">
    <location>
        <begin position="2210"/>
        <end position="2249"/>
    </location>
</feature>
<feature type="region of interest" description="NS4B-binding" evidence="14">
    <location>
        <begin position="2249"/>
        <end position="2306"/>
    </location>
</feature>
<feature type="region of interest" description="Disordered" evidence="19">
    <location>
        <begin position="2351"/>
        <end position="2408"/>
    </location>
</feature>
<feature type="region of interest" description="V3" evidence="1">
    <location>
        <begin position="2354"/>
        <end position="2377"/>
    </location>
</feature>
<feature type="short sequence motif" description="Nuclear localization signal" evidence="12">
    <location>
        <begin position="5"/>
        <end position="13"/>
    </location>
</feature>
<feature type="short sequence motif" description="Nuclear localization signal" evidence="12">
    <location>
        <begin position="38"/>
        <end position="43"/>
    </location>
</feature>
<feature type="short sequence motif" description="Nuclear localization signal" evidence="12">
    <location>
        <begin position="58"/>
        <end position="64"/>
    </location>
</feature>
<feature type="short sequence motif" description="Nuclear localization signal" evidence="12">
    <location>
        <begin position="66"/>
        <end position="71"/>
    </location>
</feature>
<feature type="short sequence motif" description="DECH box" evidence="12">
    <location>
        <begin position="1316"/>
        <end position="1319"/>
    </location>
</feature>
<feature type="short sequence motif" description="SH3-binding" evidence="14">
    <location>
        <begin position="2322"/>
        <end position="2325"/>
    </location>
</feature>
<feature type="short sequence motif" description="Nuclear localization signal" evidence="3">
    <location>
        <begin position="2326"/>
        <end position="2334"/>
    </location>
</feature>
<feature type="compositionally biased region" description="Basic residues" evidence="19">
    <location>
        <begin position="7"/>
        <end position="16"/>
    </location>
</feature>
<feature type="compositionally biased region" description="Basic residues" evidence="19">
    <location>
        <begin position="58"/>
        <end position="68"/>
    </location>
</feature>
<feature type="compositionally biased region" description="Low complexity" evidence="19">
    <location>
        <begin position="2194"/>
        <end position="2211"/>
    </location>
</feature>
<feature type="compositionally biased region" description="Polar residues" evidence="19">
    <location>
        <begin position="2351"/>
        <end position="2371"/>
    </location>
</feature>
<feature type="compositionally biased region" description="Acidic residues" evidence="19">
    <location>
        <begin position="2372"/>
        <end position="2382"/>
    </location>
</feature>
<feature type="active site" description="For protease NS2 activity; shared with dimeric partner" evidence="17">
    <location>
        <position position="952"/>
    </location>
</feature>
<feature type="active site" description="For protease NS2 activity; shared with dimeric partner" evidence="17">
    <location>
        <position position="972"/>
    </location>
</feature>
<feature type="active site" description="For protease NS2 activity; shared with dimeric partner" evidence="17">
    <location>
        <position position="993"/>
    </location>
</feature>
<feature type="active site" description="Charge relay system; for serine protease NS3 activity" evidence="18">
    <location>
        <position position="1083"/>
    </location>
</feature>
<feature type="active site" description="Charge relay system; for serine protease NS3 activity" evidence="18">
    <location>
        <position position="1107"/>
    </location>
</feature>
<feature type="active site" description="Charge relay system; for serine protease NS3 activity" evidence="18">
    <location>
        <position position="1165"/>
    </location>
</feature>
<feature type="binding site" evidence="18">
    <location>
        <position position="1123"/>
    </location>
    <ligand>
        <name>Zn(2+)</name>
        <dbReference type="ChEBI" id="CHEBI:29105"/>
        <label>1</label>
        <note>structural; for NS3 protease activity and NS2/3 auto-cleavage activity</note>
    </ligand>
</feature>
<feature type="binding site" evidence="18">
    <location>
        <position position="1125"/>
    </location>
    <ligand>
        <name>Zn(2+)</name>
        <dbReference type="ChEBI" id="CHEBI:29105"/>
        <label>1</label>
        <note>structural; for NS3 protease activity and NS2/3 auto-cleavage activity</note>
    </ligand>
</feature>
<feature type="binding site" evidence="18">
    <location>
        <position position="1171"/>
    </location>
    <ligand>
        <name>Zn(2+)</name>
        <dbReference type="ChEBI" id="CHEBI:29105"/>
        <label>1</label>
        <note>structural; for NS3 protease activity and NS2/3 auto-cleavage activity</note>
    </ligand>
</feature>
<feature type="binding site" evidence="18">
    <location>
        <position position="1175"/>
    </location>
    <ligand>
        <name>Zn(2+)</name>
        <dbReference type="ChEBI" id="CHEBI:29105"/>
        <label>1</label>
        <note>structural; for NS3 protease activity and NS2/3 auto-cleavage activity</note>
    </ligand>
</feature>
<feature type="binding site" evidence="16">
    <location>
        <begin position="1230"/>
        <end position="1237"/>
    </location>
    <ligand>
        <name>ATP</name>
        <dbReference type="ChEBI" id="CHEBI:30616"/>
    </ligand>
</feature>
<feature type="binding site" evidence="13">
    <location>
        <position position="1237"/>
    </location>
    <ligand>
        <name>Mg(2+)</name>
        <dbReference type="ChEBI" id="CHEBI:18420"/>
        <label>1</label>
        <note>catalytic; for NS3 helicase activity</note>
    </ligand>
</feature>
<feature type="binding site" evidence="13">
    <location>
        <position position="1317"/>
    </location>
    <ligand>
        <name>Mg(2+)</name>
        <dbReference type="ChEBI" id="CHEBI:18420"/>
        <label>1</label>
        <note>catalytic; for NS3 helicase activity</note>
    </ligand>
</feature>
<feature type="binding site" evidence="13">
    <location>
        <position position="2011"/>
    </location>
    <ligand>
        <name>Zn(2+)</name>
        <dbReference type="ChEBI" id="CHEBI:29105"/>
        <label>2</label>
        <note>structural</note>
    </ligand>
</feature>
<feature type="binding site" evidence="13">
    <location>
        <position position="2029"/>
    </location>
    <ligand>
        <name>Zn(2+)</name>
        <dbReference type="ChEBI" id="CHEBI:29105"/>
        <label>2</label>
        <note>structural</note>
    </ligand>
</feature>
<feature type="binding site" evidence="13">
    <location>
        <position position="2031"/>
    </location>
    <ligand>
        <name>Zn(2+)</name>
        <dbReference type="ChEBI" id="CHEBI:29105"/>
        <label>2</label>
        <note>structural</note>
    </ligand>
</feature>
<feature type="binding site" evidence="13">
    <location>
        <position position="2052"/>
    </location>
    <ligand>
        <name>Zn(2+)</name>
        <dbReference type="ChEBI" id="CHEBI:29105"/>
        <label>2</label>
        <note>structural</note>
    </ligand>
</feature>
<feature type="binding site" evidence="4">
    <location>
        <position position="2639"/>
    </location>
    <ligand>
        <name>Mg(2+)</name>
        <dbReference type="ChEBI" id="CHEBI:18420"/>
        <label>2</label>
        <note>catalytic; for RNA-directed RNA polymerase activity</note>
    </ligand>
</feature>
<feature type="binding site" evidence="4">
    <location>
        <position position="2737"/>
    </location>
    <ligand>
        <name>Mg(2+)</name>
        <dbReference type="ChEBI" id="CHEBI:18420"/>
        <label>2</label>
        <note>catalytic; for RNA-directed RNA polymerase activity</note>
    </ligand>
</feature>
<feature type="binding site" evidence="4">
    <location>
        <position position="2738"/>
    </location>
    <ligand>
        <name>Mg(2+)</name>
        <dbReference type="ChEBI" id="CHEBI:18420"/>
        <label>2</label>
        <note>catalytic; for RNA-directed RNA polymerase activity</note>
    </ligand>
</feature>
<feature type="site" description="Cleavage; by host signal peptide peptidase" evidence="3">
    <location>
        <begin position="177"/>
        <end position="178"/>
    </location>
</feature>
<feature type="site" description="Cleavage; by host signal peptidase" evidence="3">
    <location>
        <begin position="191"/>
        <end position="192"/>
    </location>
</feature>
<feature type="site" description="Cleavage; by host signal peptidase" evidence="3">
    <location>
        <begin position="383"/>
        <end position="384"/>
    </location>
</feature>
<feature type="site" description="Cleavage; by host signal peptidase" evidence="1">
    <location>
        <begin position="746"/>
        <end position="747"/>
    </location>
</feature>
<feature type="site" description="Cleavage; by host signal peptidase" evidence="1">
    <location>
        <begin position="809"/>
        <end position="810"/>
    </location>
</feature>
<feature type="site" description="Cleavage; by protease NS2-3" evidence="17">
    <location>
        <begin position="1026"/>
        <end position="1027"/>
    </location>
</feature>
<feature type="site" description="Cleavage; by serine protease/helicase NS3" evidence="6">
    <location>
        <begin position="1657"/>
        <end position="1658"/>
    </location>
</feature>
<feature type="site" description="Cleavage; by serine protease/helicase NS3" evidence="6">
    <location>
        <begin position="1711"/>
        <end position="1712"/>
    </location>
</feature>
<feature type="site" description="Cleavage; by serine protease/helicase NS3" evidence="6">
    <location>
        <begin position="1972"/>
        <end position="1973"/>
    </location>
</feature>
<feature type="site" description="Cleavage; by serine protease/helicase NS3" evidence="6">
    <location>
        <begin position="2419"/>
        <end position="2420"/>
    </location>
</feature>
<feature type="modified residue" description="N-acetylserine; by host" evidence="11">
    <location>
        <position position="2"/>
    </location>
</feature>
<feature type="modified residue" description="Phosphoserine; by host" evidence="8">
    <location>
        <position position="53"/>
    </location>
</feature>
<feature type="modified residue" description="Phosphoserine; by host" evidence="8">
    <location>
        <position position="99"/>
    </location>
</feature>
<feature type="modified residue" description="Phosphoserine; by host PKA" evidence="8">
    <location>
        <position position="116"/>
    </location>
</feature>
<feature type="modified residue" description="Phosphoserine; by host; in p56" evidence="13">
    <location>
        <position position="2194"/>
    </location>
</feature>
<feature type="modified residue" description="Phosphoserine; by host; in p58" evidence="13">
    <location>
        <position position="2197"/>
    </location>
</feature>
<feature type="modified residue" description="Phosphoserine; by host; in p58" evidence="13">
    <location>
        <position position="2201"/>
    </location>
</feature>
<feature type="modified residue" description="Phosphoserine; by host; in p58" evidence="13">
    <location>
        <position position="2204"/>
    </location>
</feature>
<feature type="modified residue" description="Phosphoserine; by host; in p58" evidence="12">
    <location>
        <position position="2207"/>
    </location>
</feature>
<feature type="modified residue" description="Phosphoserine; by host; in p58" evidence="12">
    <location>
        <position position="2210"/>
    </location>
</feature>
<feature type="modified residue" description="Phosphoserine; by host" evidence="3">
    <location>
        <position position="2448"/>
    </location>
</feature>
<feature type="modified residue" description="Phosphoserine; by host" evidence="3">
    <location>
        <position position="2461"/>
    </location>
</feature>
<feature type="lipid moiety-binding region" description="S-palmitoyl cysteine; by host" evidence="6">
    <location>
        <position position="922"/>
    </location>
</feature>
<feature type="lipid moiety-binding region" description="S-palmitoyl cysteine; by host" evidence="6">
    <location>
        <position position="1968"/>
    </location>
</feature>
<feature type="lipid moiety-binding region" description="S-palmitoyl cysteine; by host" evidence="6">
    <location>
        <position position="1972"/>
    </location>
</feature>
<feature type="glycosylation site" description="N-linked (GlcNAc...) asparagine; by host" evidence="6">
    <location>
        <position position="196"/>
    </location>
</feature>
<feature type="glycosylation site" description="N-linked (GlcNAc...) asparagine; by host" evidence="6">
    <location>
        <position position="209"/>
    </location>
</feature>
<feature type="glycosylation site" description="N-linked (GlcNAc...) asparagine; by host" evidence="6">
    <location>
        <position position="234"/>
    </location>
</feature>
<feature type="glycosylation site" description="N-linked (GlcNAc...) asparagine; by host" evidence="6">
    <location>
        <position position="250"/>
    </location>
</feature>
<feature type="glycosylation site" description="N-linked (GlcNAc...) asparagine; by host" evidence="14">
    <location>
        <position position="305"/>
    </location>
</feature>
<feature type="glycosylation site" description="N-linked (GlcNAc...) (high mannose) asparagine; by host" evidence="6">
    <location>
        <position position="417"/>
    </location>
</feature>
<feature type="glycosylation site" description="N-linked (GlcNAc...) (high mannose) asparagine; by host" evidence="6">
    <location>
        <position position="423"/>
    </location>
</feature>
<feature type="glycosylation site" description="N-linked (GlcNAc...) (high mannose) asparagine; by host" evidence="6">
    <location>
        <position position="430"/>
    </location>
</feature>
<feature type="glycosylation site" description="N-linked (GlcNAc...) (high mannose) asparagine; by host" evidence="6">
    <location>
        <position position="448"/>
    </location>
</feature>
<feature type="glycosylation site" description="N-linked (GlcNAc...) (high mannose) asparagine; by host" evidence="6">
    <location>
        <position position="532"/>
    </location>
</feature>
<feature type="glycosylation site" description="N-linked (GlcNAc...) asparagine; by host" evidence="14">
    <location>
        <position position="540"/>
    </location>
</feature>
<feature type="glycosylation site" description="N-linked (GlcNAc...) (high mannose) asparagine; by host" evidence="6">
    <location>
        <position position="556"/>
    </location>
</feature>
<feature type="glycosylation site" description="N-linked (GlcNAc...) (high mannose) asparagine; by host" evidence="6">
    <location>
        <position position="576"/>
    </location>
</feature>
<feature type="glycosylation site" description="N-linked (GlcNAc...) (high mannose) asparagine; by host" evidence="6">
    <location>
        <position position="623"/>
    </location>
</feature>
<feature type="glycosylation site" description="N-linked (GlcNAc...) (high mannose) asparagine; by host" evidence="6">
    <location>
        <position position="645"/>
    </location>
</feature>
<feature type="disulfide bond" evidence="6">
    <location>
        <begin position="429"/>
        <end position="552"/>
    </location>
</feature>
<feature type="disulfide bond" evidence="6">
    <location>
        <begin position="452"/>
        <end position="459"/>
    </location>
</feature>
<feature type="disulfide bond" evidence="6">
    <location>
        <begin position="486"/>
        <end position="494"/>
    </location>
</feature>
<feature type="disulfide bond" evidence="6">
    <location>
        <begin position="503"/>
        <end position="508"/>
    </location>
</feature>
<feature type="disulfide bond" evidence="6">
    <location>
        <begin position="564"/>
        <end position="569"/>
    </location>
</feature>
<feature type="disulfide bond" evidence="6">
    <location>
        <begin position="581"/>
        <end position="585"/>
    </location>
</feature>
<feature type="disulfide bond" evidence="6">
    <location>
        <begin position="597"/>
        <end position="620"/>
    </location>
</feature>
<feature type="disulfide bond" evidence="6">
    <location>
        <begin position="607"/>
        <end position="644"/>
    </location>
</feature>
<feature type="disulfide bond" evidence="6">
    <location>
        <begin position="652"/>
        <end position="677"/>
    </location>
</feature>
<feature type="cross-link" description="Glycyl lysine isopeptide (Lys-Gly) (interchain with G-Cter in ubiquitin)" evidence="6">
    <location>
        <position position="2350"/>
    </location>
</feature>
<accession>Q00269</accession>